<reference key="1">
    <citation type="journal article" date="1985" name="J. Mol. Biol.">
        <title>Genomic organization and nucleotide sequence of two distinct histone gene clusters from Xenopus laevis. Identification of novel conserved upstream sequence elements.</title>
        <authorList>
            <person name="Perry M."/>
            <person name="Thomsen G.H."/>
            <person name="Roeder R.G."/>
        </authorList>
    </citation>
    <scope>NUCLEOTIDE SEQUENCE [GENOMIC DNA] (GENE CLUSTER X1H3)</scope>
</reference>
<reference key="2">
    <citation type="submission" date="2004-07" db="EMBL/GenBank/DDBJ databases">
        <authorList>
            <consortium name="NIH - Xenopus Gene Collection (XGC) project"/>
        </authorList>
    </citation>
    <scope>NUCLEOTIDE SEQUENCE [LARGE SCALE MRNA]</scope>
    <source>
        <tissue>Embryo</tissue>
    </source>
</reference>
<reference key="3">
    <citation type="journal article" date="1978" name="Biochim. Biophys. Acta">
        <title>Histone H2B variants from the erythrocytes of an amphibian, a reptile and a bird.</title>
        <authorList>
            <person name="van Helden P."/>
            <person name="Strickland W.N."/>
            <person name="Brandt W.F."/>
            <person name="von Holt C."/>
        </authorList>
    </citation>
    <scope>PROTEIN SEQUENCE OF 2-30 AND 63-85</scope>
    <source>
        <tissue>Erythrocyte</tissue>
    </source>
</reference>
<reference key="4">
    <citation type="journal article" date="2003" name="Cell">
        <title>Apoptotic phosphorylation of histone H2B is mediated by mammalian sterile twenty kinase.</title>
        <authorList>
            <person name="Cheung W.L."/>
            <person name="Ajiro K."/>
            <person name="Samejima K."/>
            <person name="Kloc M."/>
            <person name="Cheung P."/>
            <person name="Mizzen C.A."/>
            <person name="Beeser A."/>
            <person name="Etkin L.D."/>
            <person name="Chernoff J."/>
            <person name="Earnshaw W.C."/>
            <person name="Allis C.D."/>
        </authorList>
    </citation>
    <scope>PHOSPHORYLATION AT SER-15</scope>
</reference>
<reference key="5">
    <citation type="journal article" date="1997" name="Nature">
        <title>Crystal structure of the nucleosome core particle at 2.8 A resolution.</title>
        <authorList>
            <person name="Luger K."/>
            <person name="Mader A.W."/>
            <person name="Richmond R.K."/>
            <person name="Sargent D.F."/>
            <person name="Richmond T.J."/>
        </authorList>
    </citation>
    <scope>X-RAY CRYSTALLOGRAPHY (2.8 ANGSTROMS) OF NUCLEOSOME CORE COMPLEX</scope>
    <scope>SUBUNIT</scope>
</reference>
<reference key="6">
    <citation type="journal article" date="2003" name="J. Mol. Biol.">
        <title>Crystal structures of nucleosome core particles in complex with minor groove DNA-binding ligands.</title>
        <authorList>
            <person name="Suto R.K."/>
            <person name="Edayathumangalam R.S."/>
            <person name="White C.L."/>
            <person name="Melander C."/>
            <person name="Gottesfeld J.M."/>
            <person name="Dervan P.B."/>
            <person name="Luger K."/>
        </authorList>
    </citation>
    <scope>X-RAY CRYSTALLOGRAPHY (2.30 ANGSTROMS) OF NUCLEOSOME CORE COMPLEX</scope>
    <scope>SUBUNIT</scope>
</reference>
<reference key="7">
    <citation type="journal article" date="2004" name="EMBO J.">
        <title>Crystal structures of histone Sin mutant nucleosomes reveal altered protein-DNA interactions.</title>
        <authorList>
            <person name="Muthurajan U.M."/>
            <person name="Bao Y."/>
            <person name="Forsberg L.J."/>
            <person name="Edayathumangalam R.S."/>
            <person name="Dyer P.N."/>
            <person name="White C.L."/>
            <person name="Luger K."/>
        </authorList>
    </citation>
    <scope>X-RAY CRYSTALLOGRAPHY (3.0 ANGSTROMS) OF NUCLEOSOME CORE COMPLEX</scope>
    <scope>SUBUNIT</scope>
</reference>
<reference evidence="11" key="8">
    <citation type="journal article" date="2019" name="Elife">
        <title>Importin-9 wraps around the H2A-H2B core to act as nuclear importer and histone chaperone.</title>
        <authorList>
            <person name="Padavannil A."/>
            <person name="Sarkar P."/>
            <person name="Kim S.J."/>
            <person name="Cagatay T."/>
            <person name="Jiou J."/>
            <person name="Brautigam C.A."/>
            <person name="Tomchick D.R."/>
            <person name="Sali A."/>
            <person name="D'Arcy S."/>
            <person name="Chook Y.M."/>
        </authorList>
    </citation>
    <scope>X-RAY CRYSTALLOGRAPHY (2.70 ANGSTROMS) OF 5-126</scope>
</reference>
<reference evidence="12 13 14" key="9">
    <citation type="journal article" date="2020" name="Nature">
        <title>Bridging of DNA breaks activates PARP2-HPF1 to modify chromatin.</title>
        <authorList>
            <person name="Bilokapic S."/>
            <person name="Suskiewicz M.J."/>
            <person name="Ahel I."/>
            <person name="Halic M."/>
        </authorList>
    </citation>
    <scope>STRUCTURE BY ELECTRON MICROSCOPY (2.20 ANGSTROMS) OF 5-126 OF NUCLEOSOME CORE COMPLEX IN COMPLEX WITH PARP2 AND HPF1</scope>
</reference>
<reference evidence="15 16" key="10">
    <citation type="journal article" date="2020" name="Cell Rep.">
        <title>Mechanistic insights into regulation of the ALC1 remodeler by the nucleosome acidic patch.</title>
        <authorList>
            <person name="Lehmann L.C."/>
            <person name="Bacic L."/>
            <person name="Hewitt G."/>
            <person name="Brackmann K."/>
            <person name="Sabantsev A."/>
            <person name="Gaullier G."/>
            <person name="Pytharopoulou S."/>
            <person name="Degliesposti G."/>
            <person name="Okkenhaug H."/>
            <person name="Tan S."/>
            <person name="Costa A."/>
            <person name="Skehel J.M."/>
            <person name="Boulton S.J."/>
            <person name="Deindl S."/>
        </authorList>
    </citation>
    <scope>STRUCTURE BY ELECTRON MICROSCOPY (2.50 ANGSTROMS) OF 5-126 OF NUCLEOSOME CORE COMPLEX IN COMPLEX WITH CHD1L</scope>
</reference>
<reference evidence="18" key="11">
    <citation type="journal article" date="2021" name="Elife">
        <title>Structure and dynamics of the chromatin remodeler ALC1 bound to a PARylated nucleosome.</title>
        <authorList>
            <person name="Bacic L."/>
            <person name="Gaullier G."/>
            <person name="Sabantsev A."/>
            <person name="Lehmann L.C."/>
            <person name="Brackmann K."/>
            <person name="Dimakou D."/>
            <person name="Halic M."/>
            <person name="Hewitt G."/>
            <person name="Boulton S.J."/>
            <person name="Deindl S."/>
        </authorList>
    </citation>
    <scope>STRUCTURE BY ELECTRON MICROSCOPY (4.80 ANGSTROMS) OF 5-126 OF NUCLEOSOME CORE COMPLEX IN COMPLEX WITH CHD1L</scope>
</reference>
<reference evidence="17" key="12">
    <citation type="journal article" date="2021" name="Nat. Commun.">
        <title>Structural basis of ALC1/CHD1L autoinhibition and the mechanism of activation by the nucleosome.</title>
        <authorList>
            <person name="Wang L."/>
            <person name="Chen K."/>
            <person name="Chen Z."/>
        </authorList>
    </citation>
    <scope>STRUCTURE BY ELECTRON MICROSCOPY (2.80 ANGSTROMS) OF 5-126 OF NUCLEOSOME CORE COMPLEX IN COMPLEX WITH CHD1L</scope>
</reference>
<protein>
    <recommendedName>
        <fullName>Histone H2B 1.1</fullName>
        <shortName>H2B1.1</shortName>
    </recommendedName>
</protein>
<organism>
    <name type="scientific">Xenopus laevis</name>
    <name type="common">African clawed frog</name>
    <dbReference type="NCBI Taxonomy" id="8355"/>
    <lineage>
        <taxon>Eukaryota</taxon>
        <taxon>Metazoa</taxon>
        <taxon>Chordata</taxon>
        <taxon>Craniata</taxon>
        <taxon>Vertebrata</taxon>
        <taxon>Euteleostomi</taxon>
        <taxon>Amphibia</taxon>
        <taxon>Batrachia</taxon>
        <taxon>Anura</taxon>
        <taxon>Pipoidea</taxon>
        <taxon>Pipidae</taxon>
        <taxon>Xenopodinae</taxon>
        <taxon>Xenopus</taxon>
        <taxon>Xenopus</taxon>
    </lineage>
</organism>
<name>H2B11_XENLA</name>
<feature type="initiator methionine" description="Removed" evidence="8">
    <location>
        <position position="1"/>
    </location>
</feature>
<feature type="chain" id="PRO_0000071854" description="Histone H2B 1.1">
    <location>
        <begin position="2"/>
        <end position="126"/>
    </location>
</feature>
<feature type="region of interest" description="Disordered" evidence="4">
    <location>
        <begin position="1"/>
        <end position="35"/>
    </location>
</feature>
<feature type="compositionally biased region" description="Low complexity" evidence="4">
    <location>
        <begin position="1"/>
        <end position="12"/>
    </location>
</feature>
<feature type="modified residue" description="N6-acetyllysine" evidence="1">
    <location>
        <position position="6"/>
    </location>
</feature>
<feature type="modified residue" description="N6-acetyllysine" evidence="1">
    <location>
        <position position="13"/>
    </location>
</feature>
<feature type="modified residue" description="Phosphoserine" evidence="6">
    <location>
        <position position="15"/>
    </location>
</feature>
<feature type="modified residue" description="N6-acetyllysine" evidence="1">
    <location>
        <position position="16"/>
    </location>
</feature>
<feature type="modified residue" description="N6-acetyllysine" evidence="1">
    <location>
        <position position="21"/>
    </location>
</feature>
<feature type="glycosylation site" description="O-linked (GlcNAc) serine" evidence="3">
    <location>
        <position position="113"/>
    </location>
</feature>
<feature type="cross-link" description="Glycyl lysine isopeptide (Lys-Gly) (interchain with G-Cter in ubiquitin)" evidence="1">
    <location>
        <position position="121"/>
    </location>
</feature>
<feature type="strand" evidence="19">
    <location>
        <begin position="9"/>
        <end position="11"/>
    </location>
</feature>
<feature type="strand" evidence="19">
    <location>
        <begin position="18"/>
        <end position="20"/>
    </location>
</feature>
<feature type="helix" evidence="20">
    <location>
        <begin position="39"/>
        <end position="49"/>
    </location>
</feature>
<feature type="strand" evidence="22">
    <location>
        <begin position="50"/>
        <end position="52"/>
    </location>
</feature>
<feature type="strand" evidence="21">
    <location>
        <begin position="54"/>
        <end position="56"/>
    </location>
</feature>
<feature type="helix" evidence="20">
    <location>
        <begin position="57"/>
        <end position="84"/>
    </location>
</feature>
<feature type="strand" evidence="20">
    <location>
        <begin position="88"/>
        <end position="90"/>
    </location>
</feature>
<feature type="helix" evidence="20">
    <location>
        <begin position="92"/>
        <end position="102"/>
    </location>
</feature>
<feature type="helix" evidence="20">
    <location>
        <begin position="105"/>
        <end position="124"/>
    </location>
</feature>
<keyword id="KW-0002">3D-structure</keyword>
<keyword id="KW-0007">Acetylation</keyword>
<keyword id="KW-0158">Chromosome</keyword>
<keyword id="KW-0903">Direct protein sequencing</keyword>
<keyword id="KW-0238">DNA-binding</keyword>
<keyword id="KW-0325">Glycoprotein</keyword>
<keyword id="KW-1017">Isopeptide bond</keyword>
<keyword id="KW-0544">Nucleosome core</keyword>
<keyword id="KW-0539">Nucleus</keyword>
<keyword id="KW-0597">Phosphoprotein</keyword>
<keyword id="KW-1185">Reference proteome</keyword>
<keyword id="KW-0832">Ubl conjugation</keyword>
<evidence type="ECO:0000250" key="1">
    <source>
        <dbReference type="UniProtKB" id="P0C1H4"/>
    </source>
</evidence>
<evidence type="ECO:0000250" key="2">
    <source>
        <dbReference type="UniProtKB" id="P33778"/>
    </source>
</evidence>
<evidence type="ECO:0000250" key="3">
    <source>
        <dbReference type="UniProtKB" id="P62807"/>
    </source>
</evidence>
<evidence type="ECO:0000256" key="4">
    <source>
        <dbReference type="SAM" id="MobiDB-lite"/>
    </source>
</evidence>
<evidence type="ECO:0000269" key="5">
    <source>
    </source>
</evidence>
<evidence type="ECO:0000269" key="6">
    <source>
    </source>
</evidence>
<evidence type="ECO:0000269" key="7">
    <source>
    </source>
</evidence>
<evidence type="ECO:0000269" key="8">
    <source>
    </source>
</evidence>
<evidence type="ECO:0000269" key="9">
    <source>
    </source>
</evidence>
<evidence type="ECO:0000305" key="10"/>
<evidence type="ECO:0007744" key="11">
    <source>
        <dbReference type="PDB" id="6N1Z"/>
    </source>
</evidence>
<evidence type="ECO:0007744" key="12">
    <source>
        <dbReference type="PDB" id="6WZ5"/>
    </source>
</evidence>
<evidence type="ECO:0007744" key="13">
    <source>
        <dbReference type="PDB" id="6WZ9"/>
    </source>
</evidence>
<evidence type="ECO:0007744" key="14">
    <source>
        <dbReference type="PDB" id="6X0N"/>
    </source>
</evidence>
<evidence type="ECO:0007744" key="15">
    <source>
        <dbReference type="PDB" id="6ZHX"/>
    </source>
</evidence>
<evidence type="ECO:0007744" key="16">
    <source>
        <dbReference type="PDB" id="6ZHY"/>
    </source>
</evidence>
<evidence type="ECO:0007744" key="17">
    <source>
        <dbReference type="PDB" id="7ENN"/>
    </source>
</evidence>
<evidence type="ECO:0007744" key="18">
    <source>
        <dbReference type="PDB" id="7OTQ"/>
    </source>
</evidence>
<evidence type="ECO:0007829" key="19">
    <source>
        <dbReference type="PDB" id="1KX5"/>
    </source>
</evidence>
<evidence type="ECO:0007829" key="20">
    <source>
        <dbReference type="PDB" id="6W4L"/>
    </source>
</evidence>
<evidence type="ECO:0007829" key="21">
    <source>
        <dbReference type="PDB" id="6YN1"/>
    </source>
</evidence>
<evidence type="ECO:0007829" key="22">
    <source>
        <dbReference type="PDB" id="8CZE"/>
    </source>
</evidence>
<dbReference type="EMBL" id="X03018">
    <property type="protein sequence ID" value="CAA26816.1"/>
    <property type="molecule type" value="Genomic_DNA"/>
</dbReference>
<dbReference type="EMBL" id="M21287">
    <property type="protein sequence ID" value="AAA49768.1"/>
    <property type="molecule type" value="Genomic_DNA"/>
</dbReference>
<dbReference type="EMBL" id="BC077399">
    <property type="protein sequence ID" value="AAH77399.1"/>
    <property type="molecule type" value="mRNA"/>
</dbReference>
<dbReference type="PIR" id="B92918">
    <property type="entry name" value="HSXLB1"/>
</dbReference>
<dbReference type="RefSeq" id="NP_001086753.1">
    <property type="nucleotide sequence ID" value="NM_001093284.1"/>
</dbReference>
<dbReference type="RefSeq" id="XP_041444754.1">
    <property type="nucleotide sequence ID" value="XM_041588820.1"/>
</dbReference>
<dbReference type="RefSeq" id="XP_041444758.1">
    <property type="nucleotide sequence ID" value="XM_041588824.1"/>
</dbReference>
<dbReference type="RefSeq" id="XP_041444765.1">
    <property type="nucleotide sequence ID" value="XM_041588831.1"/>
</dbReference>
<dbReference type="RefSeq" id="XP_041444766.1">
    <property type="nucleotide sequence ID" value="XM_041588832.1"/>
</dbReference>
<dbReference type="RefSeq" id="XP_041444781.1">
    <property type="nucleotide sequence ID" value="XM_041588847.1"/>
</dbReference>
<dbReference type="RefSeq" id="XP_041444782.1">
    <property type="nucleotide sequence ID" value="XM_041588848.1"/>
</dbReference>
<dbReference type="RefSeq" id="XP_041444797.1">
    <property type="nucleotide sequence ID" value="XM_041588863.1"/>
</dbReference>
<dbReference type="RefSeq" id="XP_041444798.1">
    <property type="nucleotide sequence ID" value="XM_041588864.1"/>
</dbReference>
<dbReference type="RefSeq" id="XP_041444799.1">
    <property type="nucleotide sequence ID" value="XM_041588865.1"/>
</dbReference>
<dbReference type="RefSeq" id="XP_041444824.1">
    <property type="nucleotide sequence ID" value="XM_041588890.1"/>
</dbReference>
<dbReference type="RefSeq" id="XP_041444825.1">
    <property type="nucleotide sequence ID" value="XM_041588891.1"/>
</dbReference>
<dbReference type="PDB" id="1AOI">
    <property type="method" value="X-ray"/>
    <property type="resolution" value="2.80 A"/>
    <property type="chains" value="D/H=28-126"/>
</dbReference>
<dbReference type="PDB" id="1F66">
    <property type="method" value="X-ray"/>
    <property type="resolution" value="2.60 A"/>
    <property type="chains" value="D/H=1-126"/>
</dbReference>
<dbReference type="PDB" id="1KX3">
    <property type="method" value="X-ray"/>
    <property type="resolution" value="2.00 A"/>
    <property type="chains" value="D/H=2-126"/>
</dbReference>
<dbReference type="PDB" id="1KX4">
    <property type="method" value="X-ray"/>
    <property type="resolution" value="2.60 A"/>
    <property type="chains" value="D/H=2-126"/>
</dbReference>
<dbReference type="PDB" id="1KX5">
    <property type="method" value="X-ray"/>
    <property type="resolution" value="1.94 A"/>
    <property type="chains" value="D/H=2-126"/>
</dbReference>
<dbReference type="PDB" id="1M18">
    <property type="method" value="X-ray"/>
    <property type="resolution" value="2.45 A"/>
    <property type="chains" value="D/H=2-126"/>
</dbReference>
<dbReference type="PDB" id="1M19">
    <property type="method" value="X-ray"/>
    <property type="resolution" value="2.30 A"/>
    <property type="chains" value="D/H=2-126"/>
</dbReference>
<dbReference type="PDB" id="1M1A">
    <property type="method" value="X-ray"/>
    <property type="resolution" value="2.65 A"/>
    <property type="chains" value="D/H=2-126"/>
</dbReference>
<dbReference type="PDB" id="1P34">
    <property type="method" value="X-ray"/>
    <property type="resolution" value="2.70 A"/>
    <property type="chains" value="D/H=2-126"/>
</dbReference>
<dbReference type="PDB" id="1P3A">
    <property type="method" value="X-ray"/>
    <property type="resolution" value="3.00 A"/>
    <property type="chains" value="D/H=2-126"/>
</dbReference>
<dbReference type="PDB" id="1P3B">
    <property type="method" value="X-ray"/>
    <property type="resolution" value="3.00 A"/>
    <property type="chains" value="D/H=2-126"/>
</dbReference>
<dbReference type="PDB" id="1P3F">
    <property type="method" value="X-ray"/>
    <property type="resolution" value="2.90 A"/>
    <property type="chains" value="D/H=2-126"/>
</dbReference>
<dbReference type="PDB" id="1P3G">
    <property type="method" value="X-ray"/>
    <property type="resolution" value="2.70 A"/>
    <property type="chains" value="D/H=2-126"/>
</dbReference>
<dbReference type="PDB" id="1P3I">
    <property type="method" value="X-ray"/>
    <property type="resolution" value="2.30 A"/>
    <property type="chains" value="D/H=2-126"/>
</dbReference>
<dbReference type="PDB" id="1P3K">
    <property type="method" value="X-ray"/>
    <property type="resolution" value="2.90 A"/>
    <property type="chains" value="D/H=2-126"/>
</dbReference>
<dbReference type="PDB" id="1P3L">
    <property type="method" value="X-ray"/>
    <property type="resolution" value="2.40 A"/>
    <property type="chains" value="D/H=2-126"/>
</dbReference>
<dbReference type="PDB" id="1P3M">
    <property type="method" value="X-ray"/>
    <property type="resolution" value="2.90 A"/>
    <property type="chains" value="D/H=2-126"/>
</dbReference>
<dbReference type="PDB" id="1P3O">
    <property type="method" value="X-ray"/>
    <property type="resolution" value="2.75 A"/>
    <property type="chains" value="D/H=2-126"/>
</dbReference>
<dbReference type="PDB" id="1P3P">
    <property type="method" value="X-ray"/>
    <property type="resolution" value="2.70 A"/>
    <property type="chains" value="D/H=2-126"/>
</dbReference>
<dbReference type="PDB" id="1S32">
    <property type="method" value="X-ray"/>
    <property type="resolution" value="2.05 A"/>
    <property type="chains" value="D/H=5-126"/>
</dbReference>
<dbReference type="PDB" id="1ZBB">
    <property type="method" value="X-ray"/>
    <property type="resolution" value="9.00 A"/>
    <property type="chains" value="D/H/d/h=2-126"/>
</dbReference>
<dbReference type="PDB" id="1ZLA">
    <property type="method" value="X-ray"/>
    <property type="resolution" value="2.90 A"/>
    <property type="chains" value="D/H=2-126"/>
</dbReference>
<dbReference type="PDB" id="2F8N">
    <property type="method" value="X-ray"/>
    <property type="resolution" value="2.90 A"/>
    <property type="chains" value="H=5-126"/>
</dbReference>
<dbReference type="PDB" id="2FJ7">
    <property type="method" value="X-ray"/>
    <property type="resolution" value="3.20 A"/>
    <property type="chains" value="D/H=2-126"/>
</dbReference>
<dbReference type="PDB" id="2NZD">
    <property type="method" value="X-ray"/>
    <property type="resolution" value="2.65 A"/>
    <property type="chains" value="D/H=2-126"/>
</dbReference>
<dbReference type="PDB" id="3B6F">
    <property type="method" value="X-ray"/>
    <property type="resolution" value="3.45 A"/>
    <property type="chains" value="D/H=2-126"/>
</dbReference>
<dbReference type="PDB" id="3B6G">
    <property type="method" value="X-ray"/>
    <property type="resolution" value="3.45 A"/>
    <property type="chains" value="D/H=2-126"/>
</dbReference>
<dbReference type="PDB" id="3KUY">
    <property type="method" value="X-ray"/>
    <property type="resolution" value="2.90 A"/>
    <property type="chains" value="D/H=2-126"/>
</dbReference>
<dbReference type="PDB" id="3KWQ">
    <property type="method" value="X-ray"/>
    <property type="resolution" value="3.50 A"/>
    <property type="chains" value="D/H=34-126"/>
</dbReference>
<dbReference type="PDB" id="3KXB">
    <property type="method" value="X-ray"/>
    <property type="resolution" value="3.20 A"/>
    <property type="chains" value="D/H=5-126"/>
</dbReference>
<dbReference type="PDB" id="3LEL">
    <property type="method" value="X-ray"/>
    <property type="resolution" value="2.95 A"/>
    <property type="chains" value="D/H/N/R=2-126"/>
</dbReference>
<dbReference type="PDB" id="3LJA">
    <property type="method" value="X-ray"/>
    <property type="resolution" value="2.75 A"/>
    <property type="chains" value="D/H=5-126"/>
</dbReference>
<dbReference type="PDB" id="3LZ0">
    <property type="method" value="X-ray"/>
    <property type="resolution" value="2.50 A"/>
    <property type="chains" value="D/H=2-126"/>
</dbReference>
<dbReference type="PDB" id="3LZ1">
    <property type="method" value="X-ray"/>
    <property type="resolution" value="2.50 A"/>
    <property type="chains" value="D/H=2-126"/>
</dbReference>
<dbReference type="PDB" id="3MGP">
    <property type="method" value="X-ray"/>
    <property type="resolution" value="2.44 A"/>
    <property type="chains" value="D/H=2-126"/>
</dbReference>
<dbReference type="PDB" id="3MGQ">
    <property type="method" value="X-ray"/>
    <property type="resolution" value="2.65 A"/>
    <property type="chains" value="D/H=2-126"/>
</dbReference>
<dbReference type="PDB" id="3MGR">
    <property type="method" value="X-ray"/>
    <property type="resolution" value="2.30 A"/>
    <property type="chains" value="D/H=2-126"/>
</dbReference>
<dbReference type="PDB" id="3MGS">
    <property type="method" value="X-ray"/>
    <property type="resolution" value="3.15 A"/>
    <property type="chains" value="D/H=2-126"/>
</dbReference>
<dbReference type="PDB" id="3MNN">
    <property type="method" value="X-ray"/>
    <property type="resolution" value="2.50 A"/>
    <property type="chains" value="D/H=2-126"/>
</dbReference>
<dbReference type="PDB" id="3MVD">
    <property type="method" value="X-ray"/>
    <property type="resolution" value="2.90 A"/>
    <property type="chains" value="D/H=5-126"/>
</dbReference>
<dbReference type="PDB" id="3O62">
    <property type="method" value="X-ray"/>
    <property type="resolution" value="3.22 A"/>
    <property type="chains" value="D/H=5-126"/>
</dbReference>
<dbReference type="PDB" id="3REH">
    <property type="method" value="X-ray"/>
    <property type="resolution" value="2.50 A"/>
    <property type="chains" value="D/H=5-126"/>
</dbReference>
<dbReference type="PDB" id="3REI">
    <property type="method" value="X-ray"/>
    <property type="resolution" value="2.65 A"/>
    <property type="chains" value="D/H=5-126"/>
</dbReference>
<dbReference type="PDB" id="3REJ">
    <property type="method" value="X-ray"/>
    <property type="resolution" value="2.55 A"/>
    <property type="chains" value="D/H=5-126"/>
</dbReference>
<dbReference type="PDB" id="3REK">
    <property type="method" value="X-ray"/>
    <property type="resolution" value="2.60 A"/>
    <property type="chains" value="D/H=5-126"/>
</dbReference>
<dbReference type="PDB" id="3REL">
    <property type="method" value="X-ray"/>
    <property type="resolution" value="2.70 A"/>
    <property type="chains" value="D/H=5-126"/>
</dbReference>
<dbReference type="PDB" id="3TU4">
    <property type="method" value="X-ray"/>
    <property type="resolution" value="3.00 A"/>
    <property type="chains" value="D/H=5-126"/>
</dbReference>
<dbReference type="PDB" id="3UT9">
    <property type="method" value="X-ray"/>
    <property type="resolution" value="2.20 A"/>
    <property type="chains" value="D/H=2-126"/>
</dbReference>
<dbReference type="PDB" id="3UTA">
    <property type="method" value="X-ray"/>
    <property type="resolution" value="2.07 A"/>
    <property type="chains" value="D/H=2-126"/>
</dbReference>
<dbReference type="PDB" id="3UTB">
    <property type="method" value="X-ray"/>
    <property type="resolution" value="2.20 A"/>
    <property type="chains" value="D/H=2-126"/>
</dbReference>
<dbReference type="PDB" id="4J8U">
    <property type="method" value="X-ray"/>
    <property type="resolution" value="2.38 A"/>
    <property type="chains" value="D/H=2-126"/>
</dbReference>
<dbReference type="PDB" id="4J8V">
    <property type="method" value="X-ray"/>
    <property type="resolution" value="2.58 A"/>
    <property type="chains" value="D/H=2-126"/>
</dbReference>
<dbReference type="PDB" id="4J8W">
    <property type="method" value="X-ray"/>
    <property type="resolution" value="2.41 A"/>
    <property type="chains" value="D/H=2-126"/>
</dbReference>
<dbReference type="PDB" id="4J8X">
    <property type="method" value="X-ray"/>
    <property type="resolution" value="2.87 A"/>
    <property type="chains" value="D/H=2-126"/>
</dbReference>
<dbReference type="PDB" id="4KGC">
    <property type="method" value="X-ray"/>
    <property type="resolution" value="2.69 A"/>
    <property type="chains" value="D/H=1-126"/>
</dbReference>
<dbReference type="PDB" id="4KHA">
    <property type="method" value="X-ray"/>
    <property type="resolution" value="2.35 A"/>
    <property type="chains" value="A=34-126"/>
</dbReference>
<dbReference type="PDB" id="4LD9">
    <property type="method" value="X-ray"/>
    <property type="resolution" value="3.31 A"/>
    <property type="chains" value="D/H=1-126"/>
</dbReference>
<dbReference type="PDB" id="4R8P">
    <property type="method" value="X-ray"/>
    <property type="resolution" value="3.28 A"/>
    <property type="chains" value="D/H=5-126"/>
</dbReference>
<dbReference type="PDB" id="4WU8">
    <property type="method" value="X-ray"/>
    <property type="resolution" value="2.45 A"/>
    <property type="chains" value="D/H=2-126"/>
</dbReference>
<dbReference type="PDB" id="4WU9">
    <property type="method" value="X-ray"/>
    <property type="resolution" value="2.60 A"/>
    <property type="chains" value="D/H=2-126"/>
</dbReference>
<dbReference type="PDB" id="4XUJ">
    <property type="method" value="X-ray"/>
    <property type="resolution" value="3.18 A"/>
    <property type="chains" value="D/H=2-126"/>
</dbReference>
<dbReference type="PDB" id="4XZQ">
    <property type="method" value="X-ray"/>
    <property type="resolution" value="2.40 A"/>
    <property type="chains" value="D/H=34-126"/>
</dbReference>
<dbReference type="PDB" id="4YS3">
    <property type="method" value="X-ray"/>
    <property type="resolution" value="3.00 A"/>
    <property type="chains" value="D/H=34-126"/>
</dbReference>
<dbReference type="PDB" id="4Z66">
    <property type="method" value="X-ray"/>
    <property type="resolution" value="2.50 A"/>
    <property type="chains" value="D/H=34-126"/>
</dbReference>
<dbReference type="PDB" id="4ZUX">
    <property type="method" value="X-ray"/>
    <property type="resolution" value="3.82 A"/>
    <property type="chains" value="D/H/N/R=5-126"/>
</dbReference>
<dbReference type="PDB" id="5CP6">
    <property type="method" value="X-ray"/>
    <property type="resolution" value="2.60 A"/>
    <property type="chains" value="D/H=2-126"/>
</dbReference>
<dbReference type="PDB" id="5DNM">
    <property type="method" value="X-ray"/>
    <property type="resolution" value="2.81 A"/>
    <property type="chains" value="D/H=2-126"/>
</dbReference>
<dbReference type="PDB" id="5DNN">
    <property type="method" value="X-ray"/>
    <property type="resolution" value="2.80 A"/>
    <property type="chains" value="D/H=2-126"/>
</dbReference>
<dbReference type="PDB" id="5E5A">
    <property type="method" value="X-ray"/>
    <property type="resolution" value="2.81 A"/>
    <property type="chains" value="D/H=5-126"/>
</dbReference>
<dbReference type="PDB" id="5F99">
    <property type="method" value="X-ray"/>
    <property type="resolution" value="2.63 A"/>
    <property type="chains" value="D/H=5-126"/>
</dbReference>
<dbReference type="PDB" id="5G2E">
    <property type="method" value="X-ray"/>
    <property type="resolution" value="6.70 A"/>
    <property type="chains" value="D/H/L/P/T/X=28-126"/>
</dbReference>
<dbReference type="PDB" id="5HQ2">
    <property type="method" value="X-ray"/>
    <property type="resolution" value="4.50 A"/>
    <property type="chains" value="H=5-126"/>
</dbReference>
<dbReference type="PDB" id="5NL0">
    <property type="method" value="X-ray"/>
    <property type="resolution" value="5.40 A"/>
    <property type="chains" value="D/H/N=5-126"/>
</dbReference>
<dbReference type="PDB" id="5O9G">
    <property type="method" value="EM"/>
    <property type="resolution" value="4.80 A"/>
    <property type="chains" value="D=5-126, H=5-125"/>
</dbReference>
<dbReference type="PDB" id="5OMX">
    <property type="method" value="X-ray"/>
    <property type="resolution" value="2.32 A"/>
    <property type="chains" value="D/H=5-126"/>
</dbReference>
<dbReference type="PDB" id="5ONG">
    <property type="method" value="X-ray"/>
    <property type="resolution" value="2.80 A"/>
    <property type="chains" value="D/H=5-126"/>
</dbReference>
<dbReference type="PDB" id="5ONW">
    <property type="method" value="X-ray"/>
    <property type="resolution" value="2.80 A"/>
    <property type="chains" value="D/H=5-126"/>
</dbReference>
<dbReference type="PDB" id="5OXV">
    <property type="method" value="X-ray"/>
    <property type="resolution" value="6.72 A"/>
    <property type="chains" value="D/H/N/R=1-126"/>
</dbReference>
<dbReference type="PDB" id="5OY7">
    <property type="method" value="X-ray"/>
    <property type="resolution" value="5.77 A"/>
    <property type="chains" value="D/H/L/P/T/X/b/f=1-126"/>
</dbReference>
<dbReference type="PDB" id="5X0X">
    <property type="method" value="EM"/>
    <property type="resolution" value="3.97 A"/>
    <property type="chains" value="D/H=2-126"/>
</dbReference>
<dbReference type="PDB" id="5X0Y">
    <property type="method" value="EM"/>
    <property type="resolution" value="3.97 A"/>
    <property type="chains" value="D/H=5-126"/>
</dbReference>
<dbReference type="PDB" id="5XF6">
    <property type="method" value="X-ray"/>
    <property type="resolution" value="2.63 A"/>
    <property type="chains" value="D/H=2-126"/>
</dbReference>
<dbReference type="PDB" id="5Z3L">
    <property type="method" value="EM"/>
    <property type="resolution" value="4.31 A"/>
    <property type="chains" value="D/H=5-126"/>
</dbReference>
<dbReference type="PDB" id="5Z3O">
    <property type="method" value="EM"/>
    <property type="resolution" value="3.62 A"/>
    <property type="chains" value="D/H=5-126"/>
</dbReference>
<dbReference type="PDB" id="5Z3U">
    <property type="method" value="EM"/>
    <property type="resolution" value="4.31 A"/>
    <property type="chains" value="D/H=5-126"/>
</dbReference>
<dbReference type="PDB" id="5Z3V">
    <property type="method" value="EM"/>
    <property type="resolution" value="4.22 A"/>
    <property type="chains" value="D/H=5-126"/>
</dbReference>
<dbReference type="PDB" id="6ESF">
    <property type="method" value="EM"/>
    <property type="resolution" value="3.70 A"/>
    <property type="chains" value="D/H=5-126"/>
</dbReference>
<dbReference type="PDB" id="6ESG">
    <property type="method" value="EM"/>
    <property type="resolution" value="5.40 A"/>
    <property type="chains" value="D/H=5-126"/>
</dbReference>
<dbReference type="PDB" id="6ESH">
    <property type="method" value="EM"/>
    <property type="resolution" value="5.10 A"/>
    <property type="chains" value="D/H=5-126"/>
</dbReference>
<dbReference type="PDB" id="6ESI">
    <property type="method" value="EM"/>
    <property type="resolution" value="6.30 A"/>
    <property type="chains" value="D/H=5-126"/>
</dbReference>
<dbReference type="PDB" id="6FQ5">
    <property type="method" value="EM"/>
    <property type="resolution" value="3.80 A"/>
    <property type="chains" value="D/H=31-125"/>
</dbReference>
<dbReference type="PDB" id="6FQ6">
    <property type="method" value="EM"/>
    <property type="resolution" value="4.00 A"/>
    <property type="chains" value="D/H=31-125"/>
</dbReference>
<dbReference type="PDB" id="6FQ8">
    <property type="method" value="EM"/>
    <property type="resolution" value="4.80 A"/>
    <property type="chains" value="D/H=31-125"/>
</dbReference>
<dbReference type="PDB" id="6I84">
    <property type="method" value="EM"/>
    <property type="resolution" value="4.40 A"/>
    <property type="chains" value="R/W=5-126"/>
</dbReference>
<dbReference type="PDB" id="6IRO">
    <property type="method" value="EM"/>
    <property type="resolution" value="3.40 A"/>
    <property type="chains" value="D/H=5-126"/>
</dbReference>
<dbReference type="PDB" id="6IY2">
    <property type="method" value="EM"/>
    <property type="resolution" value="3.47 A"/>
    <property type="chains" value="D/H=27-126"/>
</dbReference>
<dbReference type="PDB" id="6IY3">
    <property type="method" value="EM"/>
    <property type="resolution" value="3.67 A"/>
    <property type="chains" value="D/H=29-126"/>
</dbReference>
<dbReference type="PDB" id="6J99">
    <property type="method" value="EM"/>
    <property type="resolution" value="4.10 A"/>
    <property type="chains" value="D/H=5-126"/>
</dbReference>
<dbReference type="PDB" id="6JM9">
    <property type="method" value="EM"/>
    <property type="resolution" value="7.30 A"/>
    <property type="chains" value="D/H=34-126"/>
</dbReference>
<dbReference type="PDB" id="6JMA">
    <property type="method" value="EM"/>
    <property type="resolution" value="6.80 A"/>
    <property type="chains" value="D/H=34-126"/>
</dbReference>
<dbReference type="PDB" id="6JYL">
    <property type="method" value="EM"/>
    <property type="resolution" value="3.37 A"/>
    <property type="chains" value="D/H=5-126"/>
</dbReference>
<dbReference type="PDB" id="6K01">
    <property type="method" value="X-ray"/>
    <property type="resolution" value="2.84 A"/>
    <property type="chains" value="D=28-126"/>
</dbReference>
<dbReference type="PDB" id="6K1P">
    <property type="method" value="EM"/>
    <property type="resolution" value="3.87 A"/>
    <property type="chains" value="D/H=5-126"/>
</dbReference>
<dbReference type="PDB" id="6KIU">
    <property type="method" value="EM"/>
    <property type="resolution" value="3.20 A"/>
    <property type="chains" value="D/H=5-126"/>
</dbReference>
<dbReference type="PDB" id="6KIV">
    <property type="method" value="EM"/>
    <property type="resolution" value="4.00 A"/>
    <property type="chains" value="D/H=5-126"/>
</dbReference>
<dbReference type="PDB" id="6KIW">
    <property type="method" value="EM"/>
    <property type="resolution" value="4.00 A"/>
    <property type="chains" value="D/H=5-126"/>
</dbReference>
<dbReference type="PDB" id="6KIX">
    <property type="method" value="EM"/>
    <property type="resolution" value="4.10 A"/>
    <property type="chains" value="D/H=5-126"/>
</dbReference>
<dbReference type="PDB" id="6KIZ">
    <property type="method" value="EM"/>
    <property type="resolution" value="4.50 A"/>
    <property type="chains" value="D/H=5-126"/>
</dbReference>
<dbReference type="PDB" id="6KW3">
    <property type="method" value="EM"/>
    <property type="resolution" value="7.13 A"/>
    <property type="chains" value="P/T=1-126"/>
</dbReference>
<dbReference type="PDB" id="6KW4">
    <property type="method" value="EM"/>
    <property type="resolution" value="7.55 A"/>
    <property type="chains" value="P/T=1-126"/>
</dbReference>
<dbReference type="PDB" id="6LTJ">
    <property type="method" value="EM"/>
    <property type="resolution" value="3.70 A"/>
    <property type="chains" value="D/H=1-126"/>
</dbReference>
<dbReference type="PDB" id="6N1Z">
    <property type="method" value="X-ray"/>
    <property type="resolution" value="2.70 A"/>
    <property type="chains" value="C/F=5-126"/>
</dbReference>
<dbReference type="PDB" id="6NJ9">
    <property type="method" value="EM"/>
    <property type="resolution" value="2.96 A"/>
    <property type="chains" value="D/H=5-126"/>
</dbReference>
<dbReference type="PDB" id="6NN6">
    <property type="method" value="EM"/>
    <property type="resolution" value="3.90 A"/>
    <property type="chains" value="D/H=5-126"/>
</dbReference>
<dbReference type="PDB" id="6NOG">
    <property type="method" value="EM"/>
    <property type="resolution" value="3.90 A"/>
    <property type="chains" value="D/H=5-126"/>
</dbReference>
<dbReference type="PDB" id="6NQA">
    <property type="method" value="EM"/>
    <property type="resolution" value="3.54 A"/>
    <property type="chains" value="D/H=5-126"/>
</dbReference>
<dbReference type="PDB" id="6NZO">
    <property type="method" value="EM"/>
    <property type="resolution" value="3.80 A"/>
    <property type="chains" value="D/H=5-126"/>
</dbReference>
<dbReference type="PDB" id="6O96">
    <property type="method" value="EM"/>
    <property type="resolution" value="3.50 A"/>
    <property type="chains" value="D/H=5-126"/>
</dbReference>
<dbReference type="PDB" id="6OM3">
    <property type="method" value="X-ray"/>
    <property type="resolution" value="3.30 A"/>
    <property type="chains" value="D/H/P/T=1-126"/>
</dbReference>
<dbReference type="PDB" id="6PA7">
    <property type="method" value="EM"/>
    <property type="resolution" value="2.94 A"/>
    <property type="chains" value="D/H=5-126"/>
</dbReference>
<dbReference type="PDB" id="6PWV">
    <property type="method" value="EM"/>
    <property type="resolution" value="6.20 A"/>
    <property type="chains" value="J/N=5-126"/>
</dbReference>
<dbReference type="PDB" id="6PWW">
    <property type="method" value="EM"/>
    <property type="resolution" value="4.40 A"/>
    <property type="chains" value="J/N=5-126"/>
</dbReference>
<dbReference type="PDB" id="6PWX">
    <property type="method" value="EM"/>
    <property type="resolution" value="4.20 A"/>
    <property type="chains" value="J/N=5-126"/>
</dbReference>
<dbReference type="PDB" id="6PX1">
    <property type="method" value="EM"/>
    <property type="resolution" value="3.30 A"/>
    <property type="chains" value="D/H=5-126"/>
</dbReference>
<dbReference type="PDB" id="6PX3">
    <property type="method" value="EM"/>
    <property type="resolution" value="4.10 A"/>
    <property type="chains" value="D/H=5-126"/>
</dbReference>
<dbReference type="PDB" id="6R1T">
    <property type="method" value="EM"/>
    <property type="resolution" value="3.70 A"/>
    <property type="chains" value="D/H=30-125"/>
</dbReference>
<dbReference type="PDB" id="6R1U">
    <property type="method" value="EM"/>
    <property type="resolution" value="4.36 A"/>
    <property type="chains" value="D/H=5-126"/>
</dbReference>
<dbReference type="PDB" id="6R25">
    <property type="method" value="EM"/>
    <property type="resolution" value="4.61 A"/>
    <property type="chains" value="D/H=1-126"/>
</dbReference>
<dbReference type="PDB" id="6RYR">
    <property type="method" value="EM"/>
    <property type="resolution" value="3.10 A"/>
    <property type="chains" value="D/H=5-126"/>
</dbReference>
<dbReference type="PDB" id="6RYU">
    <property type="method" value="EM"/>
    <property type="resolution" value="4.00 A"/>
    <property type="chains" value="D/H=5-126"/>
</dbReference>
<dbReference type="PDB" id="6S01">
    <property type="method" value="EM"/>
    <property type="resolution" value="3.20 A"/>
    <property type="chains" value="D/H=5-126"/>
</dbReference>
<dbReference type="PDB" id="6T9L">
    <property type="method" value="EM"/>
    <property type="resolution" value="3.60 A"/>
    <property type="chains" value="D=5-126"/>
</dbReference>
<dbReference type="PDB" id="6TDA">
    <property type="method" value="EM"/>
    <property type="resolution" value="15.00 A"/>
    <property type="chains" value="D/H=5-126"/>
</dbReference>
<dbReference type="PDB" id="6TEM">
    <property type="method" value="EM"/>
    <property type="resolution" value="3.90 A"/>
    <property type="chains" value="D/H=2-126"/>
</dbReference>
<dbReference type="PDB" id="6UGM">
    <property type="method" value="EM"/>
    <property type="resolution" value="3.70 A"/>
    <property type="chains" value="H=2-126"/>
</dbReference>
<dbReference type="PDB" id="6UH5">
    <property type="method" value="EM"/>
    <property type="resolution" value="3.50 A"/>
    <property type="chains" value="D/H=2-126"/>
</dbReference>
<dbReference type="PDB" id="6UXW">
    <property type="method" value="EM"/>
    <property type="resolution" value="8.96 A"/>
    <property type="chains" value="U/Y=5-126"/>
</dbReference>
<dbReference type="PDB" id="6VEN">
    <property type="method" value="EM"/>
    <property type="resolution" value="3.37 A"/>
    <property type="chains" value="D/H=5-126"/>
</dbReference>
<dbReference type="PDB" id="6VYP">
    <property type="method" value="X-ray"/>
    <property type="resolution" value="4.99 A"/>
    <property type="chains" value="D/H/d/h=5-126"/>
</dbReference>
<dbReference type="PDB" id="6VZ4">
    <property type="method" value="EM"/>
    <property type="resolution" value="3.90 A"/>
    <property type="chains" value="D/H=1-125"/>
</dbReference>
<dbReference type="PDB" id="6W4L">
    <property type="method" value="X-ray"/>
    <property type="resolution" value="1.31 A"/>
    <property type="chains" value="A=34-126"/>
</dbReference>
<dbReference type="PDB" id="6W5I">
    <property type="method" value="EM"/>
    <property type="resolution" value="6.90 A"/>
    <property type="chains" value="J/N=5-126"/>
</dbReference>
<dbReference type="PDB" id="6W5M">
    <property type="method" value="EM"/>
    <property type="resolution" value="4.60 A"/>
    <property type="chains" value="J/N=5-126"/>
</dbReference>
<dbReference type="PDB" id="6W5N">
    <property type="method" value="EM"/>
    <property type="resolution" value="6.00 A"/>
    <property type="chains" value="J/N=5-126"/>
</dbReference>
<dbReference type="PDB" id="6WKR">
    <property type="method" value="EM"/>
    <property type="resolution" value="3.50 A"/>
    <property type="chains" value="M/S=1-126"/>
</dbReference>
<dbReference type="PDB" id="6WZ5">
    <property type="method" value="EM"/>
    <property type="resolution" value="2.20 A"/>
    <property type="chains" value="D/H=5-126"/>
</dbReference>
<dbReference type="PDB" id="6WZ9">
    <property type="method" value="EM"/>
    <property type="resolution" value="2.80 A"/>
    <property type="chains" value="D/H=5-126"/>
</dbReference>
<dbReference type="PDB" id="6X0N">
    <property type="method" value="EM"/>
    <property type="resolution" value="10.00 A"/>
    <property type="chains" value="D/H/d/h=5-126"/>
</dbReference>
<dbReference type="PDB" id="6YN1">
    <property type="method" value="X-ray"/>
    <property type="resolution" value="2.35 A"/>
    <property type="chains" value="B/G/L/Q/V/a/f/k=28-126"/>
</dbReference>
<dbReference type="PDB" id="6ZHX">
    <property type="method" value="EM"/>
    <property type="resolution" value="2.50 A"/>
    <property type="chains" value="D/H=5-126"/>
</dbReference>
<dbReference type="PDB" id="6ZHY">
    <property type="method" value="EM"/>
    <property type="resolution" value="3.00 A"/>
    <property type="chains" value="D=5-126"/>
</dbReference>
<dbReference type="PDB" id="7AT8">
    <property type="method" value="EM"/>
    <property type="resolution" value="4.40 A"/>
    <property type="chains" value="G/K=5-126"/>
</dbReference>
<dbReference type="PDB" id="7CRO">
    <property type="method" value="EM"/>
    <property type="resolution" value="3.75 A"/>
    <property type="chains" value="D/H=5-126"/>
</dbReference>
<dbReference type="PDB" id="7CRP">
    <property type="method" value="EM"/>
    <property type="resolution" value="3.20 A"/>
    <property type="chains" value="D/H=5-126"/>
</dbReference>
<dbReference type="PDB" id="7CRQ">
    <property type="method" value="EM"/>
    <property type="resolution" value="3.15 A"/>
    <property type="chains" value="D/H=5-126"/>
</dbReference>
<dbReference type="PDB" id="7CRR">
    <property type="method" value="EM"/>
    <property type="resolution" value="3.48 A"/>
    <property type="chains" value="D/H=5-126"/>
</dbReference>
<dbReference type="PDB" id="7E8I">
    <property type="method" value="EM"/>
    <property type="resolution" value="3.10 A"/>
    <property type="chains" value="D/H=5-126"/>
</dbReference>
<dbReference type="PDB" id="7EA5">
    <property type="method" value="EM"/>
    <property type="resolution" value="3.30 A"/>
    <property type="chains" value="D/H=32-124"/>
</dbReference>
<dbReference type="PDB" id="7EG6">
    <property type="method" value="EM"/>
    <property type="resolution" value="3.10 A"/>
    <property type="chains" value="D/H=5-126"/>
</dbReference>
<dbReference type="PDB" id="7EGP">
    <property type="method" value="EM"/>
    <property type="resolution" value="6.90 A"/>
    <property type="chains" value="R/V=5-126"/>
</dbReference>
<dbReference type="PDB" id="7ENN">
    <property type="method" value="EM"/>
    <property type="resolution" value="2.80 A"/>
    <property type="chains" value="D/H=5-126"/>
</dbReference>
<dbReference type="PDB" id="7K6P">
    <property type="method" value="EM"/>
    <property type="resolution" value="3.20 A"/>
    <property type="chains" value="D/H=33-125"/>
</dbReference>
<dbReference type="PDB" id="7K6Q">
    <property type="method" value="EM"/>
    <property type="resolution" value="3.10 A"/>
    <property type="chains" value="D/H=33-125"/>
</dbReference>
<dbReference type="PDB" id="7KBD">
    <property type="method" value="EM"/>
    <property type="resolution" value="3.38 A"/>
    <property type="chains" value="D/H=1-126"/>
</dbReference>
<dbReference type="PDB" id="7KBE">
    <property type="method" value="EM"/>
    <property type="resolution" value="3.50 A"/>
    <property type="chains" value="D/H=1-126"/>
</dbReference>
<dbReference type="PDB" id="7KBF">
    <property type="method" value="EM"/>
    <property type="resolution" value="4.42 A"/>
    <property type="chains" value="D/H=1-126"/>
</dbReference>
<dbReference type="PDB" id="7KTQ">
    <property type="method" value="EM"/>
    <property type="resolution" value="3.30 A"/>
    <property type="chains" value="D/H=32-126"/>
</dbReference>
<dbReference type="PDB" id="7M1X">
    <property type="method" value="EM"/>
    <property type="resolution" value="3.70 A"/>
    <property type="chains" value="D/H=1-126"/>
</dbReference>
<dbReference type="PDB" id="7MBM">
    <property type="method" value="EM"/>
    <property type="chains" value="J/N=5-126"/>
</dbReference>
<dbReference type="PDB" id="7MBN">
    <property type="method" value="EM"/>
    <property type="chains" value="J/N=5-126"/>
</dbReference>
<dbReference type="PDB" id="7NKX">
    <property type="method" value="EM"/>
    <property type="resolution" value="2.90 A"/>
    <property type="chains" value="d/h=5-126"/>
</dbReference>
<dbReference type="PDB" id="7NKY">
    <property type="method" value="EM"/>
    <property type="resolution" value="3.20 A"/>
    <property type="chains" value="d/h=5-126"/>
</dbReference>
<dbReference type="PDB" id="7OH9">
    <property type="method" value="EM"/>
    <property type="resolution" value="3.00 A"/>
    <property type="chains" value="D/H=5-126"/>
</dbReference>
<dbReference type="PDB" id="7OHA">
    <property type="method" value="EM"/>
    <property type="resolution" value="2.90 A"/>
    <property type="chains" value="D/H=5-126"/>
</dbReference>
<dbReference type="PDB" id="7OHB">
    <property type="method" value="EM"/>
    <property type="resolution" value="3.40 A"/>
    <property type="chains" value="D/H=5-126"/>
</dbReference>
<dbReference type="PDB" id="7OHC">
    <property type="method" value="EM"/>
    <property type="resolution" value="2.50 A"/>
    <property type="chains" value="D/H=5-126"/>
</dbReference>
<dbReference type="PDB" id="7OTQ">
    <property type="method" value="EM"/>
    <property type="resolution" value="4.80 A"/>
    <property type="chains" value="D/H=5-126"/>
</dbReference>
<dbReference type="PDB" id="7SWY">
    <property type="method" value="EM"/>
    <property type="resolution" value="2.60 A"/>
    <property type="chains" value="D/H=5-126"/>
</dbReference>
<dbReference type="PDB" id="7TN2">
    <property type="method" value="EM"/>
    <property type="resolution" value="2.30 A"/>
    <property type="chains" value="D/H=5-126"/>
</dbReference>
<dbReference type="PDB" id="7UD5">
    <property type="method" value="EM"/>
    <property type="resolution" value="4.25 A"/>
    <property type="chains" value="D/H=5-126"/>
</dbReference>
<dbReference type="PDB" id="7UNC">
    <property type="method" value="EM"/>
    <property type="resolution" value="3.00 A"/>
    <property type="chains" value="d/h=5-126"/>
</dbReference>
<dbReference type="PDB" id="7UND">
    <property type="method" value="EM"/>
    <property type="resolution" value="3.00 A"/>
    <property type="chains" value="d/h=5-126"/>
</dbReference>
<dbReference type="PDB" id="7VDT">
    <property type="method" value="EM"/>
    <property type="resolution" value="2.80 A"/>
    <property type="chains" value="D/H=1-126"/>
</dbReference>
<dbReference type="PDB" id="7VDV">
    <property type="method" value="EM"/>
    <property type="resolution" value="3.40 A"/>
    <property type="chains" value="D/H=1-126"/>
</dbReference>
<dbReference type="PDB" id="7VVU">
    <property type="method" value="EM"/>
    <property type="resolution" value="3.40 A"/>
    <property type="chains" value="D/U=1-126"/>
</dbReference>
<dbReference type="PDB" id="7VVZ">
    <property type="method" value="EM"/>
    <property type="resolution" value="8.80 A"/>
    <property type="chains" value="D/U=1-126"/>
</dbReference>
<dbReference type="PDB" id="7X3T">
    <property type="method" value="EM"/>
    <property type="resolution" value="5.40 A"/>
    <property type="chains" value="D/H/N/R=1-126"/>
</dbReference>
<dbReference type="PDB" id="7X3V">
    <property type="method" value="EM"/>
    <property type="resolution" value="3.09 A"/>
    <property type="chains" value="D/H=1-126"/>
</dbReference>
<dbReference type="PDB" id="7X3W">
    <property type="method" value="EM"/>
    <property type="resolution" value="3.10 A"/>
    <property type="chains" value="D/H=1-126"/>
</dbReference>
<dbReference type="PDB" id="7X3X">
    <property type="method" value="EM"/>
    <property type="resolution" value="3.20 A"/>
    <property type="chains" value="D/H=1-126"/>
</dbReference>
<dbReference type="PDB" id="7XFC">
    <property type="method" value="EM"/>
    <property type="resolution" value="2.90 A"/>
    <property type="chains" value="D/H=1-126"/>
</dbReference>
<dbReference type="PDB" id="7XFH">
    <property type="method" value="EM"/>
    <property type="resolution" value="2.90 A"/>
    <property type="chains" value="D/H=1-126"/>
</dbReference>
<dbReference type="PDB" id="7XFI">
    <property type="method" value="EM"/>
    <property type="resolution" value="2.90 A"/>
    <property type="chains" value="D/H=1-126"/>
</dbReference>
<dbReference type="PDB" id="7XFJ">
    <property type="method" value="EM"/>
    <property type="resolution" value="3.00 A"/>
    <property type="chains" value="D/H=1-126"/>
</dbReference>
<dbReference type="PDB" id="7XFL">
    <property type="method" value="EM"/>
    <property type="resolution" value="2.80 A"/>
    <property type="chains" value="D/H=1-126"/>
</dbReference>
<dbReference type="PDB" id="7XFM">
    <property type="method" value="EM"/>
    <property type="resolution" value="3.10 A"/>
    <property type="chains" value="D/H=1-126"/>
</dbReference>
<dbReference type="PDB" id="7XFN">
    <property type="method" value="EM"/>
    <property type="resolution" value="2.80 A"/>
    <property type="chains" value="D/H=1-126"/>
</dbReference>
<dbReference type="PDB" id="7XNP">
    <property type="method" value="EM"/>
    <property type="resolution" value="2.90 A"/>
    <property type="chains" value="D/H=1-126"/>
</dbReference>
<dbReference type="PDB" id="7XPX">
    <property type="method" value="EM"/>
    <property type="resolution" value="3.20 A"/>
    <property type="chains" value="D/H=5-126"/>
</dbReference>
<dbReference type="PDB" id="7YI1">
    <property type="method" value="EM"/>
    <property type="resolution" value="2.80 A"/>
    <property type="chains" value="D/H=5-126"/>
</dbReference>
<dbReference type="PDB" id="7YI4">
    <property type="method" value="EM"/>
    <property type="resolution" value="3.96 A"/>
    <property type="chains" value="J/N=5-126"/>
</dbReference>
<dbReference type="PDB" id="7YI5">
    <property type="method" value="EM"/>
    <property type="resolution" value="3.96 A"/>
    <property type="chains" value="J/N=5-126"/>
</dbReference>
<dbReference type="PDB" id="7YRG">
    <property type="method" value="EM"/>
    <property type="resolution" value="4.20 A"/>
    <property type="chains" value="D/H=32-126"/>
</dbReference>
<dbReference type="PDB" id="7ZS9">
    <property type="method" value="EM"/>
    <property type="resolution" value="3.10 A"/>
    <property type="chains" value="d/h=2-126"/>
</dbReference>
<dbReference type="PDB" id="7ZSA">
    <property type="method" value="EM"/>
    <property type="resolution" value="4.00 A"/>
    <property type="chains" value="d/h=2-126"/>
</dbReference>
<dbReference type="PDB" id="7ZSB">
    <property type="method" value="EM"/>
    <property type="resolution" value="6.60 A"/>
    <property type="chains" value="d/h=2-126"/>
</dbReference>
<dbReference type="PDB" id="8AAG">
    <property type="method" value="EM"/>
    <property type="resolution" value="10.00 A"/>
    <property type="chains" value="D/H=5-126"/>
</dbReference>
<dbReference type="PDB" id="8B0A">
    <property type="method" value="EM"/>
    <property type="resolution" value="3.00 A"/>
    <property type="chains" value="D/H=5-126"/>
</dbReference>
<dbReference type="PDB" id="8BVW">
    <property type="method" value="EM"/>
    <property type="resolution" value="4.00 A"/>
    <property type="chains" value="d/h=1-126"/>
</dbReference>
<dbReference type="PDB" id="8BYQ">
    <property type="method" value="EM"/>
    <property type="resolution" value="4.10 A"/>
    <property type="chains" value="d/h=1-126"/>
</dbReference>
<dbReference type="PDB" id="8BZ1">
    <property type="method" value="EM"/>
    <property type="resolution" value="3.80 A"/>
    <property type="chains" value="d/h=1-126"/>
</dbReference>
<dbReference type="PDB" id="8CBN">
    <property type="method" value="EM"/>
    <property type="resolution" value="3.34 A"/>
    <property type="chains" value="D/H=5-126"/>
</dbReference>
<dbReference type="PDB" id="8CBQ">
    <property type="method" value="EM"/>
    <property type="resolution" value="4.00 A"/>
    <property type="chains" value="D/H=5-126"/>
</dbReference>
<dbReference type="PDB" id="8CEO">
    <property type="method" value="EM"/>
    <property type="resolution" value="3.60 A"/>
    <property type="chains" value="u/y=2-126"/>
</dbReference>
<dbReference type="PDB" id="8CWW">
    <property type="method" value="EM"/>
    <property type="resolution" value="2.74 A"/>
    <property type="chains" value="D/H=5-126"/>
</dbReference>
<dbReference type="PDB" id="8CZE">
    <property type="method" value="EM"/>
    <property type="resolution" value="2.58 A"/>
    <property type="chains" value="D/H=5-126"/>
</dbReference>
<dbReference type="PDB" id="8DU4">
    <property type="method" value="EM"/>
    <property type="resolution" value="3.55 A"/>
    <property type="chains" value="D/H=5-126"/>
</dbReference>
<dbReference type="PDB" id="8ETT">
    <property type="method" value="EM"/>
    <property type="resolution" value="6.68 A"/>
    <property type="chains" value="D=1-126"/>
</dbReference>
<dbReference type="PDB" id="8ETV">
    <property type="method" value="EM"/>
    <property type="resolution" value="3.16 A"/>
    <property type="chains" value="D=32-126"/>
</dbReference>
<dbReference type="PDB" id="8EU2">
    <property type="method" value="EM"/>
    <property type="resolution" value="2.93 A"/>
    <property type="chains" value="N=32-126"/>
</dbReference>
<dbReference type="PDB" id="8EUE">
    <property type="method" value="EM"/>
    <property type="resolution" value="3.48 A"/>
    <property type="chains" value="D/H=32-126"/>
</dbReference>
<dbReference type="PDB" id="8EUJ">
    <property type="method" value="EM"/>
    <property type="resolution" value="3.36 A"/>
    <property type="chains" value="H/b=32-126"/>
</dbReference>
<dbReference type="PDB" id="8F86">
    <property type="method" value="EM"/>
    <property type="resolution" value="3.10 A"/>
    <property type="chains" value="D/H=5-126"/>
</dbReference>
<dbReference type="PDB" id="8G6G">
    <property type="method" value="EM"/>
    <property type="resolution" value="2.93 A"/>
    <property type="chains" value="D/H=5-126"/>
</dbReference>
<dbReference type="PDB" id="8G6H">
    <property type="method" value="EM"/>
    <property type="resolution" value="3.06 A"/>
    <property type="chains" value="D/H=5-126"/>
</dbReference>
<dbReference type="PDB" id="8G6Q">
    <property type="method" value="EM"/>
    <property type="resolution" value="3.41 A"/>
    <property type="chains" value="D/H=5-126"/>
</dbReference>
<dbReference type="PDB" id="8G6S">
    <property type="method" value="EM"/>
    <property type="resolution" value="3.47 A"/>
    <property type="chains" value="D/H=5-126"/>
</dbReference>
<dbReference type="PDB" id="8G86">
    <property type="method" value="EM"/>
    <property type="resolution" value="2.30 A"/>
    <property type="chains" value="D/H=5-126"/>
</dbReference>
<dbReference type="PDB" id="8G88">
    <property type="method" value="EM"/>
    <property type="resolution" value="4.80 A"/>
    <property type="chains" value="D/H=5-126"/>
</dbReference>
<dbReference type="PDB" id="8G8B">
    <property type="method" value="EM"/>
    <property type="resolution" value="4.30 A"/>
    <property type="chains" value="D/H=5-126"/>
</dbReference>
<dbReference type="PDB" id="8G8G">
    <property type="method" value="EM"/>
    <property type="resolution" value="3.20 A"/>
    <property type="chains" value="D/H=5-126"/>
</dbReference>
<dbReference type="PDB" id="8GPN">
    <property type="method" value="EM"/>
    <property type="resolution" value="3.20 A"/>
    <property type="chains" value="D/H=1-126"/>
</dbReference>
<dbReference type="PDB" id="8HXY">
    <property type="method" value="EM"/>
    <property type="resolution" value="3.10 A"/>
    <property type="chains" value="D/H=5-126"/>
</dbReference>
<dbReference type="PDB" id="8HXZ">
    <property type="method" value="EM"/>
    <property type="resolution" value="3.40 A"/>
    <property type="chains" value="D/H=5-126"/>
</dbReference>
<dbReference type="PDB" id="8HY0">
    <property type="method" value="EM"/>
    <property type="resolution" value="3.10 A"/>
    <property type="chains" value="D/H=5-126"/>
</dbReference>
<dbReference type="PDB" id="8IHM">
    <property type="method" value="EM"/>
    <property type="resolution" value="3.58 A"/>
    <property type="chains" value="D/H=5-126"/>
</dbReference>
<dbReference type="PDB" id="8IHT">
    <property type="method" value="EM"/>
    <property type="resolution" value="3.72 A"/>
    <property type="chains" value="D/H=5-126"/>
</dbReference>
<dbReference type="PDB" id="8JHO">
    <property type="method" value="EM"/>
    <property type="resolution" value="7.60 A"/>
    <property type="chains" value="D/H/d/h=5-126"/>
</dbReference>
<dbReference type="PDB" id="8KD2">
    <property type="method" value="EM"/>
    <property type="resolution" value="3.02 A"/>
    <property type="chains" value="R/V=5-126"/>
</dbReference>
<dbReference type="PDB" id="8KD3">
    <property type="method" value="EM"/>
    <property type="resolution" value="2.90 A"/>
    <property type="chains" value="R/V=5-126"/>
</dbReference>
<dbReference type="PDB" id="8KD4">
    <property type="method" value="EM"/>
    <property type="resolution" value="2.93 A"/>
    <property type="chains" value="R/V=5-126"/>
</dbReference>
<dbReference type="PDB" id="8KD5">
    <property type="method" value="EM"/>
    <property type="resolution" value="2.90 A"/>
    <property type="chains" value="R/V=5-126"/>
</dbReference>
<dbReference type="PDB" id="8KD6">
    <property type="method" value="EM"/>
    <property type="resolution" value="3.07 A"/>
    <property type="chains" value="R/V=5-126"/>
</dbReference>
<dbReference type="PDB" id="8KD7">
    <property type="method" value="EM"/>
    <property type="resolution" value="3.09 A"/>
    <property type="chains" value="R/V=5-126"/>
</dbReference>
<dbReference type="PDB" id="8OF4">
    <property type="method" value="EM"/>
    <property type="resolution" value="2.94 A"/>
    <property type="chains" value="D/H=1-126"/>
</dbReference>
<dbReference type="PDB" id="8PC5">
    <property type="method" value="EM"/>
    <property type="resolution" value="3.04 A"/>
    <property type="chains" value="D/H=5-126"/>
</dbReference>
<dbReference type="PDB" id="8PC6">
    <property type="method" value="EM"/>
    <property type="resolution" value="3.02 A"/>
    <property type="chains" value="D/H=5-126"/>
</dbReference>
<dbReference type="PDB" id="8PEO">
    <property type="method" value="EM"/>
    <property type="resolution" value="2.69 A"/>
    <property type="chains" value="D/H=5-126"/>
</dbReference>
<dbReference type="PDB" id="8PEP">
    <property type="method" value="EM"/>
    <property type="resolution" value="3.33 A"/>
    <property type="chains" value="D/H=5-126"/>
</dbReference>
<dbReference type="PDB" id="8RUP">
    <property type="method" value="EM"/>
    <property type="resolution" value="2.42 A"/>
    <property type="chains" value="D/H=5-126"/>
</dbReference>
<dbReference type="PDB" id="8RUQ">
    <property type="method" value="EM"/>
    <property type="resolution" value="2.29 A"/>
    <property type="chains" value="D/H=5-126"/>
</dbReference>
<dbReference type="PDB" id="8SIY">
    <property type="method" value="EM"/>
    <property type="resolution" value="2.90 A"/>
    <property type="chains" value="F/J=5-126"/>
</dbReference>
<dbReference type="PDB" id="8SKZ">
    <property type="method" value="EM"/>
    <property type="resolution" value="3.50 A"/>
    <property type="chains" value="D/H=5-126"/>
</dbReference>
<dbReference type="PDB" id="8SVF">
    <property type="method" value="EM"/>
    <property type="resolution" value="3.20 A"/>
    <property type="chains" value="D/H=1-126"/>
</dbReference>
<dbReference type="PDB" id="8T3T">
    <property type="method" value="EM"/>
    <property type="resolution" value="3.21 A"/>
    <property type="chains" value="D/H=5-126"/>
</dbReference>
<dbReference type="PDB" id="8T3W">
    <property type="method" value="EM"/>
    <property type="resolution" value="3.25 A"/>
    <property type="chains" value="D/H=5-126"/>
</dbReference>
<dbReference type="PDB" id="8T3Y">
    <property type="method" value="EM"/>
    <property type="resolution" value="3.47 A"/>
    <property type="chains" value="D/H=5-126"/>
</dbReference>
<dbReference type="PDB" id="8T9F">
    <property type="method" value="EM"/>
    <property type="resolution" value="2.60 A"/>
    <property type="chains" value="D/H=5-126"/>
</dbReference>
<dbReference type="PDB" id="8T9G">
    <property type="method" value="EM"/>
    <property type="resolution" value="6.20 A"/>
    <property type="chains" value="S/V=5-126"/>
</dbReference>
<dbReference type="PDB" id="8T9H">
    <property type="method" value="EM"/>
    <property type="resolution" value="3.37 A"/>
    <property type="chains" value="D/H=5-126"/>
</dbReference>
<dbReference type="PDB" id="8TAS">
    <property type="method" value="EM"/>
    <property type="resolution" value="4.10 A"/>
    <property type="chains" value="S/V=5-126"/>
</dbReference>
<dbReference type="PDB" id="8TB9">
    <property type="method" value="EM"/>
    <property type="resolution" value="4.00 A"/>
    <property type="chains" value="S/V=5-126"/>
</dbReference>
<dbReference type="PDB" id="8THU">
    <property type="method" value="EM"/>
    <property type="resolution" value="3.10 A"/>
    <property type="chains" value="D/H=5-126"/>
</dbReference>
<dbReference type="PDB" id="8TOF">
    <property type="method" value="EM"/>
    <property type="resolution" value="2.80 A"/>
    <property type="chains" value="d/h=5-126"/>
</dbReference>
<dbReference type="PDB" id="8U5H">
    <property type="method" value="EM"/>
    <property type="resolution" value="3.23 A"/>
    <property type="chains" value="M/S=5-126"/>
</dbReference>
<dbReference type="PDB" id="8UW1">
    <property type="method" value="EM"/>
    <property type="resolution" value="2.88 A"/>
    <property type="chains" value="D/H=1-126"/>
</dbReference>
<dbReference type="PDB" id="8UXQ">
    <property type="method" value="EM"/>
    <property type="resolution" value="6.30 A"/>
    <property type="chains" value="H/N=2-126"/>
</dbReference>
<dbReference type="PDB" id="8V25">
    <property type="method" value="EM"/>
    <property type="resolution" value="3.32 A"/>
    <property type="chains" value="D/H=5-126"/>
</dbReference>
<dbReference type="PDB" id="8V26">
    <property type="method" value="EM"/>
    <property type="resolution" value="3.33 A"/>
    <property type="chains" value="D/H=5-126"/>
</dbReference>
<dbReference type="PDB" id="8V27">
    <property type="method" value="EM"/>
    <property type="resolution" value="3.34 A"/>
    <property type="chains" value="D/H=5-126"/>
</dbReference>
<dbReference type="PDB" id="8V28">
    <property type="method" value="EM"/>
    <property type="resolution" value="3.36 A"/>
    <property type="chains" value="D/H=5-126"/>
</dbReference>
<dbReference type="PDB" id="8V4Y">
    <property type="method" value="EM"/>
    <property type="resolution" value="2.80 A"/>
    <property type="chains" value="D/H=5-126"/>
</dbReference>
<dbReference type="PDB" id="8V6V">
    <property type="method" value="EM"/>
    <property type="resolution" value="2.80 A"/>
    <property type="chains" value="D/H=5-126"/>
</dbReference>
<dbReference type="PDB" id="8V7L">
    <property type="method" value="EM"/>
    <property type="resolution" value="2.90 A"/>
    <property type="chains" value="D/H=5-126"/>
</dbReference>
<dbReference type="PDB" id="8VOB">
    <property type="method" value="EM"/>
    <property type="resolution" value="3.10 A"/>
    <property type="chains" value="M/S=31-126"/>
</dbReference>
<dbReference type="PDB" id="8VX5">
    <property type="method" value="EM"/>
    <property type="resolution" value="3.30 A"/>
    <property type="chains" value="D/H=5-126"/>
</dbReference>
<dbReference type="PDB" id="8VX6">
    <property type="method" value="EM"/>
    <property type="resolution" value="3.20 A"/>
    <property type="chains" value="D/H=5-126"/>
</dbReference>
<dbReference type="PDB" id="8XAA">
    <property type="method" value="X-ray"/>
    <property type="resolution" value="3.35 A"/>
    <property type="chains" value="J/L=28-126"/>
</dbReference>
<dbReference type="PDB" id="8XJV">
    <property type="method" value="EM"/>
    <property type="resolution" value="3.60 A"/>
    <property type="chains" value="Aa/Ab/Ac/Ad/Af/Ag/At/J/M/N/O/P/Q/R/S/T/U/V/W/av/aw/ax/ay/az=5-126"/>
</dbReference>
<dbReference type="PDB" id="9B2S">
    <property type="method" value="EM"/>
    <property type="resolution" value="3.01 A"/>
    <property type="chains" value="D/H=5-126"/>
</dbReference>
<dbReference type="PDB" id="9B2T">
    <property type="method" value="EM"/>
    <property type="resolution" value="2.99 A"/>
    <property type="chains" value="D/H=5-126"/>
</dbReference>
<dbReference type="PDB" id="9B3P">
    <property type="method" value="EM"/>
    <property type="resolution" value="3.00 A"/>
    <property type="chains" value="D/H=1-126"/>
</dbReference>
<dbReference type="PDB" id="9DBY">
    <property type="method" value="EM"/>
    <property type="resolution" value="2.80 A"/>
    <property type="chains" value="D/H=1-126"/>
</dbReference>
<dbReference type="PDB" id="9DDE">
    <property type="method" value="EM"/>
    <property type="resolution" value="3.20 A"/>
    <property type="chains" value="D/H=1-126"/>
</dbReference>
<dbReference type="PDB" id="9DG3">
    <property type="method" value="EM"/>
    <property type="resolution" value="3.46 A"/>
    <property type="chains" value="D/H=1-126"/>
</dbReference>
<dbReference type="PDB" id="9DGG">
    <property type="method" value="EM"/>
    <property type="resolution" value="2.98 A"/>
    <property type="chains" value="D/H=1-126"/>
</dbReference>
<dbReference type="PDB" id="9E1L">
    <property type="method" value="EM"/>
    <property type="resolution" value="3.15 A"/>
    <property type="chains" value="D/H=1-126"/>
</dbReference>
<dbReference type="PDB" id="9E1M">
    <property type="method" value="EM"/>
    <property type="resolution" value="3.25 A"/>
    <property type="chains" value="D/H=1-126"/>
</dbReference>
<dbReference type="PDB" id="9E1N">
    <property type="method" value="EM"/>
    <property type="resolution" value="3.40 A"/>
    <property type="chains" value="D/H=1-126"/>
</dbReference>
<dbReference type="PDB" id="9E1O">
    <property type="method" value="EM"/>
    <property type="resolution" value="3.30 A"/>
    <property type="chains" value="D/H=1-126"/>
</dbReference>
<dbReference type="PDB" id="9E1P">
    <property type="method" value="EM"/>
    <property type="resolution" value="3.25 A"/>
    <property type="chains" value="D/H=1-126"/>
</dbReference>
<dbReference type="PDB" id="9E1Q">
    <property type="method" value="EM"/>
    <property type="resolution" value="3.10 A"/>
    <property type="chains" value="D/H=1-126"/>
</dbReference>
<dbReference type="PDB" id="9E1R">
    <property type="method" value="EM"/>
    <property type="resolution" value="3.10 A"/>
    <property type="chains" value="D/H=1-126"/>
</dbReference>
<dbReference type="PDB" id="9E1U">
    <property type="method" value="EM"/>
    <property type="resolution" value="3.10 A"/>
    <property type="chains" value="D/H=1-126"/>
</dbReference>
<dbReference type="PDB" id="9E1V">
    <property type="method" value="EM"/>
    <property type="resolution" value="3.10 A"/>
    <property type="chains" value="D/H=1-126"/>
</dbReference>
<dbReference type="PDB" id="9E1W">
    <property type="method" value="EM"/>
    <property type="resolution" value="3.20 A"/>
    <property type="chains" value="D/H=1-126"/>
</dbReference>
<dbReference type="PDB" id="9E1X">
    <property type="method" value="EM"/>
    <property type="resolution" value="3.40 A"/>
    <property type="chains" value="D/H=1-126"/>
</dbReference>
<dbReference type="PDB" id="9E1Y">
    <property type="method" value="EM"/>
    <property type="resolution" value="2.60 A"/>
    <property type="chains" value="D/H=1-126"/>
</dbReference>
<dbReference type="PDB" id="9EGX">
    <property type="method" value="EM"/>
    <property type="resolution" value="2.90 A"/>
    <property type="chains" value="d=5-126"/>
</dbReference>
<dbReference type="PDB" id="9EGY">
    <property type="method" value="EM"/>
    <property type="resolution" value="2.90 A"/>
    <property type="chains" value="d/h=5-126"/>
</dbReference>
<dbReference type="PDB" id="9EGZ">
    <property type="method" value="EM"/>
    <property type="resolution" value="2.90 A"/>
    <property type="chains" value="d/h=5-126"/>
</dbReference>
<dbReference type="PDB" id="9EH0">
    <property type="method" value="EM"/>
    <property type="resolution" value="3.60 A"/>
    <property type="chains" value="d/h=5-126"/>
</dbReference>
<dbReference type="PDB" id="9EH1">
    <property type="method" value="EM"/>
    <property type="resolution" value="3.10 A"/>
    <property type="chains" value="d/h=5-126"/>
</dbReference>
<dbReference type="PDB" id="9EH2">
    <property type="method" value="EM"/>
    <property type="resolution" value="3.10 A"/>
    <property type="chains" value="h=5-126"/>
</dbReference>
<dbReference type="PDB" id="9FH9">
    <property type="method" value="EM"/>
    <property type="resolution" value="2.50 A"/>
    <property type="chains" value="D/H=5-126"/>
</dbReference>
<dbReference type="PDB" id="9GD0">
    <property type="method" value="EM"/>
    <property type="resolution" value="2.80 A"/>
    <property type="chains" value="D/H/N=5-126"/>
</dbReference>
<dbReference type="PDB" id="9GD1">
    <property type="method" value="EM"/>
    <property type="resolution" value="4.00 A"/>
    <property type="chains" value="D/H/N=5-126"/>
</dbReference>
<dbReference type="PDB" id="9GD2">
    <property type="method" value="EM"/>
    <property type="resolution" value="4.20 A"/>
    <property type="chains" value="D/H/N/Q=5-126"/>
</dbReference>
<dbReference type="PDB" id="9GD3">
    <property type="method" value="EM"/>
    <property type="resolution" value="3.00 A"/>
    <property type="chains" value="D/H=5-126"/>
</dbReference>
<dbReference type="PDBsum" id="1AOI"/>
<dbReference type="PDBsum" id="1F66"/>
<dbReference type="PDBsum" id="1KX3"/>
<dbReference type="PDBsum" id="1KX4"/>
<dbReference type="PDBsum" id="1KX5"/>
<dbReference type="PDBsum" id="1M18"/>
<dbReference type="PDBsum" id="1M19"/>
<dbReference type="PDBsum" id="1M1A"/>
<dbReference type="PDBsum" id="1P34"/>
<dbReference type="PDBsum" id="1P3A"/>
<dbReference type="PDBsum" id="1P3B"/>
<dbReference type="PDBsum" id="1P3F"/>
<dbReference type="PDBsum" id="1P3G"/>
<dbReference type="PDBsum" id="1P3I"/>
<dbReference type="PDBsum" id="1P3K"/>
<dbReference type="PDBsum" id="1P3L"/>
<dbReference type="PDBsum" id="1P3M"/>
<dbReference type="PDBsum" id="1P3O"/>
<dbReference type="PDBsum" id="1P3P"/>
<dbReference type="PDBsum" id="1S32"/>
<dbReference type="PDBsum" id="1ZBB"/>
<dbReference type="PDBsum" id="1ZLA"/>
<dbReference type="PDBsum" id="2F8N"/>
<dbReference type="PDBsum" id="2FJ7"/>
<dbReference type="PDBsum" id="2NZD"/>
<dbReference type="PDBsum" id="3B6F"/>
<dbReference type="PDBsum" id="3B6G"/>
<dbReference type="PDBsum" id="3KUY"/>
<dbReference type="PDBsum" id="3KWQ"/>
<dbReference type="PDBsum" id="3KXB"/>
<dbReference type="PDBsum" id="3LEL"/>
<dbReference type="PDBsum" id="3LJA"/>
<dbReference type="PDBsum" id="3LZ0"/>
<dbReference type="PDBsum" id="3LZ1"/>
<dbReference type="PDBsum" id="3MGP"/>
<dbReference type="PDBsum" id="3MGQ"/>
<dbReference type="PDBsum" id="3MGR"/>
<dbReference type="PDBsum" id="3MGS"/>
<dbReference type="PDBsum" id="3MNN"/>
<dbReference type="PDBsum" id="3MVD"/>
<dbReference type="PDBsum" id="3O62"/>
<dbReference type="PDBsum" id="3REH"/>
<dbReference type="PDBsum" id="3REI"/>
<dbReference type="PDBsum" id="3REJ"/>
<dbReference type="PDBsum" id="3REK"/>
<dbReference type="PDBsum" id="3REL"/>
<dbReference type="PDBsum" id="3TU4"/>
<dbReference type="PDBsum" id="3UT9"/>
<dbReference type="PDBsum" id="3UTA"/>
<dbReference type="PDBsum" id="3UTB"/>
<dbReference type="PDBsum" id="4J8U"/>
<dbReference type="PDBsum" id="4J8V"/>
<dbReference type="PDBsum" id="4J8W"/>
<dbReference type="PDBsum" id="4J8X"/>
<dbReference type="PDBsum" id="4KGC"/>
<dbReference type="PDBsum" id="4KHA"/>
<dbReference type="PDBsum" id="4LD9"/>
<dbReference type="PDBsum" id="4R8P"/>
<dbReference type="PDBsum" id="4WU8"/>
<dbReference type="PDBsum" id="4WU9"/>
<dbReference type="PDBsum" id="4XUJ"/>
<dbReference type="PDBsum" id="4XZQ"/>
<dbReference type="PDBsum" id="4YS3"/>
<dbReference type="PDBsum" id="4Z66"/>
<dbReference type="PDBsum" id="4ZUX"/>
<dbReference type="PDBsum" id="5CP6"/>
<dbReference type="PDBsum" id="5DNM"/>
<dbReference type="PDBsum" id="5DNN"/>
<dbReference type="PDBsum" id="5E5A"/>
<dbReference type="PDBsum" id="5F99"/>
<dbReference type="PDBsum" id="5G2E"/>
<dbReference type="PDBsum" id="5HQ2"/>
<dbReference type="PDBsum" id="5NL0"/>
<dbReference type="PDBsum" id="5O9G"/>
<dbReference type="PDBsum" id="5OMX"/>
<dbReference type="PDBsum" id="5ONG"/>
<dbReference type="PDBsum" id="5ONW"/>
<dbReference type="PDBsum" id="5OXV"/>
<dbReference type="PDBsum" id="5OY7"/>
<dbReference type="PDBsum" id="5X0X"/>
<dbReference type="PDBsum" id="5X0Y"/>
<dbReference type="PDBsum" id="5XF6"/>
<dbReference type="PDBsum" id="5Z3L"/>
<dbReference type="PDBsum" id="5Z3O"/>
<dbReference type="PDBsum" id="5Z3U"/>
<dbReference type="PDBsum" id="5Z3V"/>
<dbReference type="PDBsum" id="6ESF"/>
<dbReference type="PDBsum" id="6ESG"/>
<dbReference type="PDBsum" id="6ESH"/>
<dbReference type="PDBsum" id="6ESI"/>
<dbReference type="PDBsum" id="6FQ5"/>
<dbReference type="PDBsum" id="6FQ6"/>
<dbReference type="PDBsum" id="6FQ8"/>
<dbReference type="PDBsum" id="6I84"/>
<dbReference type="PDBsum" id="6IRO"/>
<dbReference type="PDBsum" id="6IY2"/>
<dbReference type="PDBsum" id="6IY3"/>
<dbReference type="PDBsum" id="6J99"/>
<dbReference type="PDBsum" id="6JM9"/>
<dbReference type="PDBsum" id="6JMA"/>
<dbReference type="PDBsum" id="6JYL"/>
<dbReference type="PDBsum" id="6K01"/>
<dbReference type="PDBsum" id="6K1P"/>
<dbReference type="PDBsum" id="6KIU"/>
<dbReference type="PDBsum" id="6KIV"/>
<dbReference type="PDBsum" id="6KIW"/>
<dbReference type="PDBsum" id="6KIX"/>
<dbReference type="PDBsum" id="6KIZ"/>
<dbReference type="PDBsum" id="6KW3"/>
<dbReference type="PDBsum" id="6KW4"/>
<dbReference type="PDBsum" id="6LTJ"/>
<dbReference type="PDBsum" id="6N1Z"/>
<dbReference type="PDBsum" id="6NJ9"/>
<dbReference type="PDBsum" id="6NN6"/>
<dbReference type="PDBsum" id="6NOG"/>
<dbReference type="PDBsum" id="6NQA"/>
<dbReference type="PDBsum" id="6NZO"/>
<dbReference type="PDBsum" id="6O96"/>
<dbReference type="PDBsum" id="6OM3"/>
<dbReference type="PDBsum" id="6PA7"/>
<dbReference type="PDBsum" id="6PWV"/>
<dbReference type="PDBsum" id="6PWW"/>
<dbReference type="PDBsum" id="6PWX"/>
<dbReference type="PDBsum" id="6PX1"/>
<dbReference type="PDBsum" id="6PX3"/>
<dbReference type="PDBsum" id="6R1T"/>
<dbReference type="PDBsum" id="6R1U"/>
<dbReference type="PDBsum" id="6R25"/>
<dbReference type="PDBsum" id="6RYR"/>
<dbReference type="PDBsum" id="6RYU"/>
<dbReference type="PDBsum" id="6S01"/>
<dbReference type="PDBsum" id="6T9L"/>
<dbReference type="PDBsum" id="6TDA"/>
<dbReference type="PDBsum" id="6TEM"/>
<dbReference type="PDBsum" id="6UGM"/>
<dbReference type="PDBsum" id="6UH5"/>
<dbReference type="PDBsum" id="6UXW"/>
<dbReference type="PDBsum" id="6VEN"/>
<dbReference type="PDBsum" id="6VYP"/>
<dbReference type="PDBsum" id="6VZ4"/>
<dbReference type="PDBsum" id="6W4L"/>
<dbReference type="PDBsum" id="6W5I"/>
<dbReference type="PDBsum" id="6W5M"/>
<dbReference type="PDBsum" id="6W5N"/>
<dbReference type="PDBsum" id="6WKR"/>
<dbReference type="PDBsum" id="6WZ5"/>
<dbReference type="PDBsum" id="6WZ9"/>
<dbReference type="PDBsum" id="6X0N"/>
<dbReference type="PDBsum" id="6YN1"/>
<dbReference type="PDBsum" id="6ZHX"/>
<dbReference type="PDBsum" id="6ZHY"/>
<dbReference type="PDBsum" id="7AT8"/>
<dbReference type="PDBsum" id="7CRO"/>
<dbReference type="PDBsum" id="7CRP"/>
<dbReference type="PDBsum" id="7CRQ"/>
<dbReference type="PDBsum" id="7CRR"/>
<dbReference type="PDBsum" id="7E8I"/>
<dbReference type="PDBsum" id="7EA5"/>
<dbReference type="PDBsum" id="7EG6"/>
<dbReference type="PDBsum" id="7EGP"/>
<dbReference type="PDBsum" id="7ENN"/>
<dbReference type="PDBsum" id="7K6P"/>
<dbReference type="PDBsum" id="7K6Q"/>
<dbReference type="PDBsum" id="7KBD"/>
<dbReference type="PDBsum" id="7KBE"/>
<dbReference type="PDBsum" id="7KBF"/>
<dbReference type="PDBsum" id="7KTQ"/>
<dbReference type="PDBsum" id="7M1X"/>
<dbReference type="PDBsum" id="7MBM"/>
<dbReference type="PDBsum" id="7MBN"/>
<dbReference type="PDBsum" id="7NKX"/>
<dbReference type="PDBsum" id="7NKY"/>
<dbReference type="PDBsum" id="7OH9"/>
<dbReference type="PDBsum" id="7OHA"/>
<dbReference type="PDBsum" id="7OHB"/>
<dbReference type="PDBsum" id="7OHC"/>
<dbReference type="PDBsum" id="7OTQ"/>
<dbReference type="PDBsum" id="7SWY"/>
<dbReference type="PDBsum" id="7TN2"/>
<dbReference type="PDBsum" id="7UD5"/>
<dbReference type="PDBsum" id="7UNC"/>
<dbReference type="PDBsum" id="7UND"/>
<dbReference type="PDBsum" id="7VDT"/>
<dbReference type="PDBsum" id="7VDV"/>
<dbReference type="PDBsum" id="7VVU"/>
<dbReference type="PDBsum" id="7VVZ"/>
<dbReference type="PDBsum" id="7X3T"/>
<dbReference type="PDBsum" id="7X3V"/>
<dbReference type="PDBsum" id="7X3W"/>
<dbReference type="PDBsum" id="7X3X"/>
<dbReference type="PDBsum" id="7XFC"/>
<dbReference type="PDBsum" id="7XFH"/>
<dbReference type="PDBsum" id="7XFI"/>
<dbReference type="PDBsum" id="7XFJ"/>
<dbReference type="PDBsum" id="7XFL"/>
<dbReference type="PDBsum" id="7XFM"/>
<dbReference type="PDBsum" id="7XFN"/>
<dbReference type="PDBsum" id="7XNP"/>
<dbReference type="PDBsum" id="7XPX"/>
<dbReference type="PDBsum" id="7YI1"/>
<dbReference type="PDBsum" id="7YI4"/>
<dbReference type="PDBsum" id="7YI5"/>
<dbReference type="PDBsum" id="7YRG"/>
<dbReference type="PDBsum" id="7ZS9"/>
<dbReference type="PDBsum" id="7ZSA"/>
<dbReference type="PDBsum" id="7ZSB"/>
<dbReference type="PDBsum" id="8AAG"/>
<dbReference type="PDBsum" id="8B0A"/>
<dbReference type="PDBsum" id="8BVW"/>
<dbReference type="PDBsum" id="8BYQ"/>
<dbReference type="PDBsum" id="8BZ1"/>
<dbReference type="PDBsum" id="8CBN"/>
<dbReference type="PDBsum" id="8CBQ"/>
<dbReference type="PDBsum" id="8CEO"/>
<dbReference type="PDBsum" id="8CWW"/>
<dbReference type="PDBsum" id="8CZE"/>
<dbReference type="PDBsum" id="8DU4"/>
<dbReference type="PDBsum" id="8ETT"/>
<dbReference type="PDBsum" id="8ETV"/>
<dbReference type="PDBsum" id="8EU2"/>
<dbReference type="PDBsum" id="8EUE"/>
<dbReference type="PDBsum" id="8EUJ"/>
<dbReference type="PDBsum" id="8F86"/>
<dbReference type="PDBsum" id="8G6G"/>
<dbReference type="PDBsum" id="8G6H"/>
<dbReference type="PDBsum" id="8G6Q"/>
<dbReference type="PDBsum" id="8G6S"/>
<dbReference type="PDBsum" id="8G86"/>
<dbReference type="PDBsum" id="8G88"/>
<dbReference type="PDBsum" id="8G8B"/>
<dbReference type="PDBsum" id="8G8G"/>
<dbReference type="PDBsum" id="8GPN"/>
<dbReference type="PDBsum" id="8HXY"/>
<dbReference type="PDBsum" id="8HXZ"/>
<dbReference type="PDBsum" id="8HY0"/>
<dbReference type="PDBsum" id="8IHM"/>
<dbReference type="PDBsum" id="8IHT"/>
<dbReference type="PDBsum" id="8JHO"/>
<dbReference type="PDBsum" id="8KD2"/>
<dbReference type="PDBsum" id="8KD3"/>
<dbReference type="PDBsum" id="8KD4"/>
<dbReference type="PDBsum" id="8KD5"/>
<dbReference type="PDBsum" id="8KD6"/>
<dbReference type="PDBsum" id="8KD7"/>
<dbReference type="PDBsum" id="8OF4"/>
<dbReference type="PDBsum" id="8PC5"/>
<dbReference type="PDBsum" id="8PC6"/>
<dbReference type="PDBsum" id="8PEO"/>
<dbReference type="PDBsum" id="8PEP"/>
<dbReference type="PDBsum" id="8RUP"/>
<dbReference type="PDBsum" id="8RUQ"/>
<dbReference type="PDBsum" id="8SIY"/>
<dbReference type="PDBsum" id="8SKZ"/>
<dbReference type="PDBsum" id="8SVF"/>
<dbReference type="PDBsum" id="8T3T"/>
<dbReference type="PDBsum" id="8T3W"/>
<dbReference type="PDBsum" id="8T3Y"/>
<dbReference type="PDBsum" id="8T9F"/>
<dbReference type="PDBsum" id="8T9G"/>
<dbReference type="PDBsum" id="8T9H"/>
<dbReference type="PDBsum" id="8TAS"/>
<dbReference type="PDBsum" id="8TB9"/>
<dbReference type="PDBsum" id="8THU"/>
<dbReference type="PDBsum" id="8TOF"/>
<dbReference type="PDBsum" id="8U5H"/>
<dbReference type="PDBsum" id="8UW1"/>
<dbReference type="PDBsum" id="8UXQ"/>
<dbReference type="PDBsum" id="8V25"/>
<dbReference type="PDBsum" id="8V26"/>
<dbReference type="PDBsum" id="8V27"/>
<dbReference type="PDBsum" id="8V28"/>
<dbReference type="PDBsum" id="8V4Y"/>
<dbReference type="PDBsum" id="8V6V"/>
<dbReference type="PDBsum" id="8V7L"/>
<dbReference type="PDBsum" id="8VOB"/>
<dbReference type="PDBsum" id="8VX5"/>
<dbReference type="PDBsum" id="8VX6"/>
<dbReference type="PDBsum" id="8XAA"/>
<dbReference type="PDBsum" id="8XJV"/>
<dbReference type="PDBsum" id="9B2S"/>
<dbReference type="PDBsum" id="9B2T"/>
<dbReference type="PDBsum" id="9B3P"/>
<dbReference type="PDBsum" id="9DBY"/>
<dbReference type="PDBsum" id="9DDE"/>
<dbReference type="PDBsum" id="9DG3"/>
<dbReference type="PDBsum" id="9DGG"/>
<dbReference type="PDBsum" id="9E1L"/>
<dbReference type="PDBsum" id="9E1M"/>
<dbReference type="PDBsum" id="9E1N"/>
<dbReference type="PDBsum" id="9E1O"/>
<dbReference type="PDBsum" id="9E1P"/>
<dbReference type="PDBsum" id="9E1Q"/>
<dbReference type="PDBsum" id="9E1R"/>
<dbReference type="PDBsum" id="9E1U"/>
<dbReference type="PDBsum" id="9E1V"/>
<dbReference type="PDBsum" id="9E1W"/>
<dbReference type="PDBsum" id="9E1X"/>
<dbReference type="PDBsum" id="9E1Y"/>
<dbReference type="PDBsum" id="9EGX"/>
<dbReference type="PDBsum" id="9EGY"/>
<dbReference type="PDBsum" id="9EGZ"/>
<dbReference type="PDBsum" id="9EH0"/>
<dbReference type="PDBsum" id="9EH1"/>
<dbReference type="PDBsum" id="9EH2"/>
<dbReference type="PDBsum" id="9FH9"/>
<dbReference type="PDBsum" id="9GD0"/>
<dbReference type="PDBsum" id="9GD1"/>
<dbReference type="PDBsum" id="9GD2"/>
<dbReference type="PDBsum" id="9GD3"/>
<dbReference type="EMDB" id="EMD-0458"/>
<dbReference type="EMDB" id="EMD-0468"/>
<dbReference type="EMDB" id="EMD-0480"/>
<dbReference type="EMDB" id="EMD-0559"/>
<dbReference type="EMDB" id="EMD-0693"/>
<dbReference type="EMDB" id="EMD-0694"/>
<dbReference type="EMDB" id="EMD-0695"/>
<dbReference type="EMDB" id="EMD-10058"/>
<dbReference type="EMDB" id="EMD-10059"/>
<dbReference type="EMDB" id="EMD-10069"/>
<dbReference type="EMDB" id="EMD-10415"/>
<dbReference type="EMDB" id="EMD-10465"/>
<dbReference type="EMDB" id="EMD-11220"/>
<dbReference type="EMDB" id="EMD-11221"/>
<dbReference type="EMDB" id="EMD-11910"/>
<dbReference type="EMDB" id="EMD-12449"/>
<dbReference type="EMDB" id="EMD-12450"/>
<dbReference type="EMDB" id="EMD-12897"/>
<dbReference type="EMDB" id="EMD-12898"/>
<dbReference type="EMDB" id="EMD-12899"/>
<dbReference type="EMDB" id="EMD-12900"/>
<dbReference type="EMDB" id="EMD-13065"/>
<dbReference type="EMDB" id="EMD-14927"/>
<dbReference type="EMDB" id="EMD-14928"/>
<dbReference type="EMDB" id="EMD-14929"/>
<dbReference type="EMDB" id="EMD-15777"/>
<dbReference type="EMDB" id="EMD-16274"/>
<dbReference type="EMDB" id="EMD-16331"/>
<dbReference type="EMDB" id="EMD-16335"/>
<dbReference type="EMDB" id="EMD-16546"/>
<dbReference type="EMDB" id="EMD-16549"/>
<dbReference type="EMDB" id="EMD-16611"/>
<dbReference type="EMDB" id="EMD-16842"/>
<dbReference type="EMDB" id="EMD-17594"/>
<dbReference type="EMDB" id="EMD-17595"/>
<dbReference type="EMDB" id="EMD-17633"/>
<dbReference type="EMDB" id="EMD-17634"/>
<dbReference type="EMDB" id="EMD-17944"/>
<dbReference type="EMDB" id="EMD-19513"/>
<dbReference type="EMDB" id="EMD-19514"/>
<dbReference type="EMDB" id="EMD-20281"/>
<dbReference type="EMDB" id="EMD-20512"/>
<dbReference type="EMDB" id="EMD-20513"/>
<dbReference type="EMDB" id="EMD-20514"/>
<dbReference type="EMDB" id="EMD-20516"/>
<dbReference type="EMDB" id="EMD-20517"/>
<dbReference type="EMDB" id="EMD-20765"/>
<dbReference type="EMDB" id="EMD-20934"/>
<dbReference type="EMDB" id="EMD-21157"/>
<dbReference type="EMDB" id="EMD-21542"/>
<dbReference type="EMDB" id="EMD-21543"/>
<dbReference type="EMDB" id="EMD-21544"/>
<dbReference type="EMDB" id="EMD-21707"/>
<dbReference type="EMDB" id="EMD-21970"/>
<dbReference type="EMDB" id="EMD-21971"/>
<dbReference type="EMDB" id="EMD-21980"/>
<dbReference type="EMDB" id="EMD-22691"/>
<dbReference type="EMDB" id="EMD-22692"/>
<dbReference type="EMDB" id="EMD-22790"/>
<dbReference type="EMDB" id="EMD-22791"/>
<dbReference type="EMDB" id="EMD-22792"/>
<dbReference type="EMDB" id="EMD-23626"/>
<dbReference type="EMDB" id="EMD-23738"/>
<dbReference type="EMDB" id="EMD-23739"/>
<dbReference type="EMDB" id="EMD-26454"/>
<dbReference type="EMDB" id="EMD-26620"/>
<dbReference type="EMDB" id="EMD-26621"/>
<dbReference type="EMDB" id="EMD-27030"/>
<dbReference type="EMDB" id="EMD-27096"/>
<dbReference type="EMDB" id="EMD-27715"/>
<dbReference type="EMDB" id="EMD-28598"/>
<dbReference type="EMDB" id="EMD-28600"/>
<dbReference type="EMDB" id="EMD-28602"/>
<dbReference type="EMDB" id="EMD-28915"/>
<dbReference type="EMDB" id="EMD-29767"/>
<dbReference type="EMDB" id="EMD-29769"/>
<dbReference type="EMDB" id="EMD-29778"/>
<dbReference type="EMDB" id="EMD-29781"/>
<dbReference type="EMDB" id="EMD-29837"/>
<dbReference type="EMDB" id="EMD-29843"/>
<dbReference type="EMDB" id="EMD-29845"/>
<dbReference type="EMDB" id="EMD-29850"/>
<dbReference type="EMDB" id="EMD-31020"/>
<dbReference type="EMDB" id="EMD-31039"/>
<dbReference type="EMDB" id="EMD-31106"/>
<dbReference type="EMDB" id="EMD-31137"/>
<dbReference type="EMDB" id="EMD-31217"/>
<dbReference type="EMDB" id="EMD-31925"/>
<dbReference type="EMDB" id="EMD-31926"/>
<dbReference type="EMDB" id="EMD-32148"/>
<dbReference type="EMDB" id="EMD-32150"/>
<dbReference type="EMDB" id="EMD-32992"/>
<dbReference type="EMDB" id="EMD-32994"/>
<dbReference type="EMDB" id="EMD-32995"/>
<dbReference type="EMDB" id="EMD-32996"/>
<dbReference type="EMDB" id="EMD-33171"/>
<dbReference type="EMDB" id="EMD-33172"/>
<dbReference type="EMDB" id="EMD-33173"/>
<dbReference type="EMDB" id="EMD-33174"/>
<dbReference type="EMDB" id="EMD-33175"/>
<dbReference type="EMDB" id="EMD-33176"/>
<dbReference type="EMDB" id="EMD-33177"/>
<dbReference type="EMDB" id="EMD-33322"/>
<dbReference type="EMDB" id="EMD-33385"/>
<dbReference type="EMDB" id="EMD-33848"/>
<dbReference type="EMDB" id="EMD-33851"/>
<dbReference type="EMDB" id="EMD-33852"/>
<dbReference type="EMDB" id="EMD-34053"/>
<dbReference type="EMDB" id="EMD-34055"/>
<dbReference type="EMDB" id="EMD-34195"/>
<dbReference type="EMDB" id="EMD-37122"/>
<dbReference type="EMDB" id="EMD-37123"/>
<dbReference type="EMDB" id="EMD-37124"/>
<dbReference type="EMDB" id="EMD-37125"/>
<dbReference type="EMDB" id="EMD-37126"/>
<dbReference type="EMDB" id="EMD-37127"/>
<dbReference type="EMDB" id="EMD-3765"/>
<dbReference type="EMDB" id="EMD-38407"/>
<dbReference type="EMDB" id="EMD-3947"/>
<dbReference type="EMDB" id="EMD-3948"/>
<dbReference type="EMDB" id="EMD-3949"/>
<dbReference type="EMDB" id="EMD-3950"/>
<dbReference type="EMDB" id="EMD-40522"/>
<dbReference type="EMDB" id="EMD-40569"/>
<dbReference type="EMDB" id="EMD-40789"/>
<dbReference type="EMDB" id="EMD-41011"/>
<dbReference type="EMDB" id="EMD-41015"/>
<dbReference type="EMDB" id="EMD-41016"/>
<dbReference type="EMDB" id="EMD-41109"/>
<dbReference type="EMDB" id="EMD-41110"/>
<dbReference type="EMDB" id="EMD-41111"/>
<dbReference type="EMDB" id="EMD-41113"/>
<dbReference type="EMDB" id="EMD-41141"/>
<dbReference type="EMDB" id="EMD-41146"/>
<dbReference type="EMDB" id="EMD-41272"/>
<dbReference type="EMDB" id="EMD-41449"/>
<dbReference type="EMDB" id="EMD-41922"/>
<dbReference type="EMDB" id="EMD-42636"/>
<dbReference type="EMDB" id="EMD-42774"/>
<dbReference type="EMDB" id="EMD-42898"/>
<dbReference type="EMDB" id="EMD-42899"/>
<dbReference type="EMDB" id="EMD-42900"/>
<dbReference type="EMDB" id="EMD-42901"/>
<dbReference type="EMDB" id="EMD-42977"/>
<dbReference type="EMDB" id="EMD-43000"/>
<dbReference type="EMDB" id="EMD-43001"/>
<dbReference type="EMDB" id="EMD-43002"/>
<dbReference type="EMDB" id="EMD-43003"/>
<dbReference type="EMDB" id="EMD-43004"/>
<dbReference type="EMDB" id="EMD-43005"/>
<dbReference type="EMDB" id="EMD-43363"/>
<dbReference type="EMDB" id="EMD-43373"/>
<dbReference type="EMDB" id="EMD-43608"/>
<dbReference type="EMDB" id="EMD-43609"/>
<dbReference type="EMDB" id="EMD-44113"/>
<dbReference type="EMDB" id="EMD-44114"/>
<dbReference type="EMDB" id="EMD-44148"/>
<dbReference type="EMDB" id="EMD-4429"/>
<dbReference type="EMDB" id="EMD-46728"/>
<dbReference type="EMDB" id="EMD-46732"/>
<dbReference type="EMDB" id="EMD-46733"/>
<dbReference type="EMDB" id="EMD-46771"/>
<dbReference type="EMDB" id="EMD-46822"/>
<dbReference type="EMDB" id="EMD-46823"/>
<dbReference type="EMDB" id="EMD-4705"/>
<dbReference type="EMDB" id="EMD-4710"/>
<dbReference type="EMDB" id="EMD-47412"/>
<dbReference type="EMDB" id="EMD-47413"/>
<dbReference type="EMDB" id="EMD-47414"/>
<dbReference type="EMDB" id="EMD-47415"/>
<dbReference type="EMDB" id="EMD-47416"/>
<dbReference type="EMDB" id="EMD-47417"/>
<dbReference type="EMDB" id="EMD-47418"/>
<dbReference type="EMDB" id="EMD-47421"/>
<dbReference type="EMDB" id="EMD-47422"/>
<dbReference type="EMDB" id="EMD-47423"/>
<dbReference type="EMDB" id="EMD-47424"/>
<dbReference type="EMDB" id="EMD-47425"/>
<dbReference type="EMDB" id="EMD-47428"/>
<dbReference type="EMDB" id="EMD-48039"/>
<dbReference type="EMDB" id="EMD-48040"/>
<dbReference type="EMDB" id="EMD-48041"/>
<dbReference type="EMDB" id="EMD-48042"/>
<dbReference type="EMDB" id="EMD-48043"/>
<dbReference type="EMDB" id="EMD-48044"/>
<dbReference type="EMDB" id="EMD-50443"/>
<dbReference type="EMDB" id="EMD-51238"/>
<dbReference type="EMDB" id="EMD-51241"/>
<dbReference type="EMDB" id="EMD-51244"/>
<dbReference type="EMDB" id="EMD-51247"/>
<dbReference type="EMDB" id="EMD-6699"/>
<dbReference type="EMDB" id="EMD-6700"/>
<dbReference type="EMDB" id="EMD-6879"/>
<dbReference type="EMDB" id="EMD-6880"/>
<dbReference type="EMDB" id="EMD-6882"/>
<dbReference type="EMDB" id="EMD-6883"/>
<dbReference type="EMDB" id="EMD-9384"/>
<dbReference type="EMDB" id="EMD-9718"/>
<dbReference type="EMDB" id="EMD-9719"/>
<dbReference type="EMDB" id="EMD-9720"/>
<dbReference type="EMDB" id="EMD-9783"/>
<dbReference type="EMDB" id="EMD-9843"/>
<dbReference type="EMDB" id="EMD-9844"/>
<dbReference type="EMDB" id="EMD-9998"/>
<dbReference type="EMDB" id="EMD-9999"/>
<dbReference type="SASBDB" id="P02281"/>
<dbReference type="SMR" id="P02281"/>
<dbReference type="BioGRID" id="103448">
    <property type="interactions" value="10"/>
</dbReference>
<dbReference type="DIP" id="DIP-38577N"/>
<dbReference type="IntAct" id="P02281">
    <property type="interactions" value="11"/>
</dbReference>
<dbReference type="iPTMnet" id="P02281"/>
<dbReference type="DNASU" id="446588"/>
<dbReference type="GeneID" id="121402223"/>
<dbReference type="GeneID" id="121402228"/>
<dbReference type="GeneID" id="121402236"/>
<dbReference type="GeneID" id="121402237"/>
<dbReference type="GeneID" id="121402247"/>
<dbReference type="GeneID" id="121402248"/>
<dbReference type="GeneID" id="121402259"/>
<dbReference type="GeneID" id="121402260"/>
<dbReference type="GeneID" id="121402261"/>
<dbReference type="GeneID" id="121402274"/>
<dbReference type="GeneID" id="121402275"/>
<dbReference type="GeneID" id="446588"/>
<dbReference type="KEGG" id="xla:446588"/>
<dbReference type="AGR" id="Xenbase:XB-GENE-6493994"/>
<dbReference type="CTD" id="446588"/>
<dbReference type="Xenbase" id="XB-GENE-6493994">
    <property type="gene designation" value="h2bc11.S"/>
</dbReference>
<dbReference type="OrthoDB" id="1733721at2759"/>
<dbReference type="EvolutionaryTrace" id="P02281"/>
<dbReference type="Proteomes" id="UP000186698">
    <property type="component" value="Chromosome 3S"/>
</dbReference>
<dbReference type="Bgee" id="446588">
    <property type="expression patterns" value="Expressed in ovary and 13 other cell types or tissues"/>
</dbReference>
<dbReference type="GO" id="GO:0000786">
    <property type="term" value="C:nucleosome"/>
    <property type="evidence" value="ECO:0007669"/>
    <property type="project" value="UniProtKB-KW"/>
</dbReference>
<dbReference type="GO" id="GO:0005634">
    <property type="term" value="C:nucleus"/>
    <property type="evidence" value="ECO:0007669"/>
    <property type="project" value="UniProtKB-SubCell"/>
</dbReference>
<dbReference type="GO" id="GO:0003677">
    <property type="term" value="F:DNA binding"/>
    <property type="evidence" value="ECO:0007669"/>
    <property type="project" value="UniProtKB-KW"/>
</dbReference>
<dbReference type="GO" id="GO:0046982">
    <property type="term" value="F:protein heterodimerization activity"/>
    <property type="evidence" value="ECO:0007669"/>
    <property type="project" value="InterPro"/>
</dbReference>
<dbReference type="GO" id="GO:0030527">
    <property type="term" value="F:structural constituent of chromatin"/>
    <property type="evidence" value="ECO:0007669"/>
    <property type="project" value="InterPro"/>
</dbReference>
<dbReference type="CDD" id="cd22910">
    <property type="entry name" value="HFD_H2B"/>
    <property type="match status" value="1"/>
</dbReference>
<dbReference type="FunFam" id="1.10.20.10:FF:000003">
    <property type="entry name" value="Histone H2B"/>
    <property type="match status" value="1"/>
</dbReference>
<dbReference type="Gene3D" id="1.10.20.10">
    <property type="entry name" value="Histone, subunit A"/>
    <property type="match status" value="1"/>
</dbReference>
<dbReference type="IDEAL" id="IID50135"/>
<dbReference type="InterPro" id="IPR009072">
    <property type="entry name" value="Histone-fold"/>
</dbReference>
<dbReference type="InterPro" id="IPR007125">
    <property type="entry name" value="Histone_H2A/H2B/H3"/>
</dbReference>
<dbReference type="InterPro" id="IPR000558">
    <property type="entry name" value="Histone_H2B"/>
</dbReference>
<dbReference type="InterPro" id="IPR055333">
    <property type="entry name" value="HISTONE_H2B_site"/>
</dbReference>
<dbReference type="PANTHER" id="PTHR23428">
    <property type="entry name" value="HISTONE H2B"/>
    <property type="match status" value="1"/>
</dbReference>
<dbReference type="Pfam" id="PF00125">
    <property type="entry name" value="Histone"/>
    <property type="match status" value="1"/>
</dbReference>
<dbReference type="PRINTS" id="PR00621">
    <property type="entry name" value="HISTONEH2B"/>
</dbReference>
<dbReference type="SMART" id="SM00427">
    <property type="entry name" value="H2B"/>
    <property type="match status" value="1"/>
</dbReference>
<dbReference type="SUPFAM" id="SSF47113">
    <property type="entry name" value="Histone-fold"/>
    <property type="match status" value="1"/>
</dbReference>
<dbReference type="PROSITE" id="PS00357">
    <property type="entry name" value="HISTONE_H2B"/>
    <property type="match status" value="1"/>
</dbReference>
<comment type="function">
    <text>Core component of nucleosome. Nucleosomes wrap and compact DNA into chromatin, limiting DNA accessibility to the cellular machineries which require DNA as a template. Histones thereby play a central role in transcription regulation, DNA repair, DNA replication and chromosomal stability. DNA accessibility is regulated via a complex set of post-translational modifications of histones, also called histone code, and nucleosome remodeling.</text>
</comment>
<comment type="subunit">
    <text evidence="5 7 9">The nucleosome is a histone octamer containing two molecules each of H2A, H2B, H3 and H4 assembled in one H3-H4 heterotetramer and two H2A-H2B heterodimers. The octamer wraps approximately 147 bp of DNA.</text>
</comment>
<comment type="interaction">
    <interactant intactId="EBI-1251201">
        <id>P02281</id>
    </interactant>
    <interactant intactId="EBI-992720">
        <id>P18754</id>
        <label>RCC1</label>
    </interactant>
    <organismsDiffer>true</organismsDiffer>
    <experiments>2</experiments>
</comment>
<comment type="subcellular location">
    <subcellularLocation>
        <location>Nucleus</location>
    </subcellularLocation>
    <subcellularLocation>
        <location>Chromosome</location>
    </subcellularLocation>
</comment>
<comment type="PTM">
    <text evidence="2">Monoubiquitination of Lys-121 by BRE1 gives a specific tag for epigenetic transcriptional activation and is also prerequisite for histone H3 'Lys-4' and 'Lys-79' methylation.</text>
</comment>
<comment type="PTM">
    <text evidence="6">Phosphorylated on Ser-15 during developmentally programmed apoptosis; which may facilitate apoptotic chromatin condensation.</text>
</comment>
<comment type="PTM">
    <text evidence="3">GlcNAcylation at Ser-113 promotes monoubiquitination of Lys-121. It fluctuates in response to extracellular glucose, and associates with transcribed genes (By similarity).</text>
</comment>
<comment type="similarity">
    <text evidence="10">Belongs to the histone H2B family.</text>
</comment>
<sequence length="126" mass="13934">MPEPAKSAPAPKKGSKKAVTKTQKKDGKKRRKSRKESYAIYVYKVLKQVHPDTGISSKAMSIMNSFVNDVFERIAGEASRLAHYNKRSTITSREIQTAVRLLLPGELAKHAVSEGTKAVTKYTSAK</sequence>
<proteinExistence type="evidence at protein level"/>
<accession>P02281</accession>
<accession>Q6AZT0</accession>